<accession>P48736</accession>
<accession>A4D0Q6</accession>
<accession>Q8IV23</accession>
<accession>Q9BZC8</accession>
<organism>
    <name type="scientific">Homo sapiens</name>
    <name type="common">Human</name>
    <dbReference type="NCBI Taxonomy" id="9606"/>
    <lineage>
        <taxon>Eukaryota</taxon>
        <taxon>Metazoa</taxon>
        <taxon>Chordata</taxon>
        <taxon>Craniata</taxon>
        <taxon>Vertebrata</taxon>
        <taxon>Euteleostomi</taxon>
        <taxon>Mammalia</taxon>
        <taxon>Eutheria</taxon>
        <taxon>Euarchontoglires</taxon>
        <taxon>Primates</taxon>
        <taxon>Haplorrhini</taxon>
        <taxon>Catarrhini</taxon>
        <taxon>Hominidae</taxon>
        <taxon>Homo</taxon>
    </lineage>
</organism>
<sequence length="1102" mass="126454">MELENYKQPVVLREDNCRRRRRMKPRSAAASLSSMELIPIEFVLPTSQRKCKSPETALLHVAGHGNVEQMKAQVWLRALETSVAADFYHRLGPHHFLLLYQKKGQWYEIYDKYQVVQTLDCLRYWKATHRSPGQIHLVQRHPPSEESQAFQRQLTALIGYDVTDVSNVHDDELEFTRRGLVTPRMAEVASRDPKLYAMHPWVTSKPLPEYLWKKIANNCIFIVIHRSTTSQTIKVSPDDTPGAILQSFFTKMAKKKSLMDIPESQSEQDFVLRVCGRDEYLVGETPIKNFQWVRHCLKNGEEIHVVLDTPPDPALDEVRKEEWPLVDDCTGVTGYHEQLTIHGKDHESVFTVSLWDCDRKFRVKIRGIDIPVLPRNTDLTVFVEANIQHGQQVLCQRRTSPKPFTEEVLWNVWLEFSIKIKDLPKGALLNLQIYCGKAPALSSKASAESPSSESKGKVQLLYYVNLLLIDHRFLLRRGEYVLHMWQISGKGEDQGSFNADKLTSATNPDKENSMSISILLDNYCHPIALPKHQPTPDPEGDRVRAEMPNQLRKQLEAIIATDPLNPLTAEDKELLWHFRYESLKHPKAYPKLFSSVKWGQQEIVAKTYQLLARREVWDQSALDVGLTMQLLDCNFSDENVRAIAVQKLESLEDDDVLHYLLQLVQAVKFEPYHDSALARFLLKRGLRNKRIGHFLFWFLRSEIAQSRHYQQRFAVILEAYLRGCGTAMLHDFTQQVQVIEMLQKVTLDIKSLSAEKYDVSSQVISQLKQKLENLQNSQLPESFRVPYDPGLKAGALAIEKCKVMASKKKPLWLEFKCADPTALSNETIGIIFKHGDDLRQDMLILQILRIMESIWETESLDLCLLPYGCISTGDKIGMIEIVKDATTIAKIQQSTVGNTGAFKDEVLNHWLKEKSPTEEKFQAAVERFVYSCAGYCVATFVLGIGDRHNDNIMITETGNLFHIDFGHILGNYKSFLGINKERVPFVLTPDFLFVMGTSGKKTSPHFQKFQDICVKAYLALRHHTNLLIILFSMMLMTGMPQLTSKEDIEYIRDALTVGKNEEDAKKYFLDQIEVCRDKGWTVQFNWFLHLVLGIKQGEKHSA</sequence>
<feature type="chain" id="PRO_0000088792" description="Phosphatidylinositol 4,5-bisphosphate 3-kinase catalytic subunit gamma isoform">
    <location>
        <begin position="1"/>
        <end position="1102"/>
    </location>
</feature>
<feature type="domain" description="PI3K-ABD" evidence="4">
    <location>
        <begin position="34"/>
        <end position="141"/>
    </location>
</feature>
<feature type="domain" description="PI3K-RBD" evidence="6">
    <location>
        <begin position="217"/>
        <end position="309"/>
    </location>
</feature>
<feature type="domain" description="C2 PI3K-type" evidence="7">
    <location>
        <begin position="357"/>
        <end position="521"/>
    </location>
</feature>
<feature type="domain" description="PIK helical" evidence="5">
    <location>
        <begin position="541"/>
        <end position="723"/>
    </location>
</feature>
<feature type="domain" description="PI3K/PI4K catalytic" evidence="3">
    <location>
        <begin position="797"/>
        <end position="1080"/>
    </location>
</feature>
<feature type="region of interest" description="G-loop" evidence="3">
    <location>
        <begin position="803"/>
        <end position="809"/>
    </location>
</feature>
<feature type="region of interest" description="Catalytic loop" evidence="3">
    <location>
        <begin position="943"/>
        <end position="951"/>
    </location>
</feature>
<feature type="region of interest" description="Activation loop" evidence="3">
    <location>
        <begin position="962"/>
        <end position="988"/>
    </location>
</feature>
<feature type="binding site" evidence="1">
    <location>
        <begin position="829"/>
        <end position="838"/>
    </location>
    <ligand>
        <name>ATP</name>
        <dbReference type="ChEBI" id="CHEBI:30616"/>
    </ligand>
</feature>
<feature type="binding site" evidence="1">
    <location>
        <begin position="864"/>
        <end position="872"/>
    </location>
    <ligand>
        <name>ATP</name>
        <dbReference type="ChEBI" id="CHEBI:30616"/>
    </ligand>
</feature>
<feature type="binding site" evidence="1">
    <location>
        <begin position="961"/>
        <end position="969"/>
    </location>
    <ligand>
        <name>ATP</name>
        <dbReference type="ChEBI" id="CHEBI:30616"/>
    </ligand>
</feature>
<feature type="modified residue" description="Phosphothreonine; by PKA" evidence="2">
    <location>
        <position position="1024"/>
    </location>
</feature>
<feature type="modified residue" description="Phosphoserine; by autocatalysis" evidence="11">
    <location>
        <position position="1101"/>
    </location>
</feature>
<feature type="sequence variant" id="VAR_087092" description="In IMD97; loss-of-function variant unable to rescue reduced T-cell activation when expressed in Jurkat PIK3CG-deficient cells." evidence="20">
    <original>R</original>
    <variation>S</variation>
    <location>
        <position position="49"/>
    </location>
</feature>
<feature type="sequence variant" id="VAR_087093" description="In IMD97; loss of phosphatidylinositol-3,4-bisphosphate 5-kinase activity." evidence="19">
    <original>R</original>
    <variation>P</variation>
    <location>
        <position position="1021"/>
    </location>
</feature>
<feature type="sequence variant" id="VAR_087094" description="In IMD97; loss-of-function variant unable to rescue reduced T-cell activation when expressed in Jurkat PIK3CG-deficient cells." evidence="20">
    <original>N</original>
    <variation>S</variation>
    <location>
        <position position="1085"/>
    </location>
</feature>
<feature type="mutagenesis site" description="Loss of kinase activity. Loss of autophosphorylation. Reduced inflammatory reactions but no alterations in cardiac contractility." evidence="13 15">
    <original>K</original>
    <variation>R</variation>
    <location>
        <position position="833"/>
    </location>
</feature>
<feature type="mutagenesis site" description="Abolishes protein and lipid kinase activity. Does not abolish interaction with GRK2." evidence="15">
    <original>R</original>
    <variation>P</variation>
    <location>
        <position position="947"/>
    </location>
</feature>
<feature type="mutagenesis site" description="Loss of autophosphorylation. No effect on phosphatidylinositol-4,5-bisphosphate 3-kinase activity." evidence="11">
    <original>S</original>
    <variation>A</variation>
    <variation>Q</variation>
    <location>
        <position position="1101"/>
    </location>
</feature>
<feature type="sequence conflict" description="In Ref. 1; CAA58284." evidence="22" ref="1">
    <location>
        <position position="30"/>
    </location>
</feature>
<feature type="sequence conflict" description="In Ref. 1; CAA58284 and 3; AAG61115." evidence="22" ref="1 3">
    <original>Q</original>
    <variation>R</variation>
    <location>
        <position position="459"/>
    </location>
</feature>
<feature type="strand" evidence="45">
    <location>
        <begin position="41"/>
        <end position="44"/>
    </location>
</feature>
<feature type="strand" evidence="45">
    <location>
        <begin position="55"/>
        <end position="58"/>
    </location>
</feature>
<feature type="strand" evidence="46">
    <location>
        <begin position="64"/>
        <end position="66"/>
    </location>
</feature>
<feature type="helix" evidence="45">
    <location>
        <begin position="70"/>
        <end position="81"/>
    </location>
</feature>
<feature type="helix" evidence="45">
    <location>
        <begin position="83"/>
        <end position="89"/>
    </location>
</feature>
<feature type="strand" evidence="45">
    <location>
        <begin position="96"/>
        <end position="108"/>
    </location>
</feature>
<feature type="helix" evidence="45">
    <location>
        <begin position="115"/>
        <end position="118"/>
    </location>
</feature>
<feature type="helix" evidence="45">
    <location>
        <begin position="119"/>
        <end position="128"/>
    </location>
</feature>
<feature type="strand" evidence="45">
    <location>
        <begin position="134"/>
        <end position="139"/>
    </location>
</feature>
<feature type="helix" evidence="28">
    <location>
        <begin position="145"/>
        <end position="158"/>
    </location>
</feature>
<feature type="helix" evidence="31">
    <location>
        <begin position="165"/>
        <end position="167"/>
    </location>
</feature>
<feature type="strand" evidence="28">
    <location>
        <begin position="169"/>
        <end position="171"/>
    </location>
</feature>
<feature type="helix" evidence="28">
    <location>
        <begin position="172"/>
        <end position="179"/>
    </location>
</feature>
<feature type="helix" evidence="28">
    <location>
        <begin position="181"/>
        <end position="190"/>
    </location>
</feature>
<feature type="helix" evidence="28">
    <location>
        <begin position="193"/>
        <end position="198"/>
    </location>
</feature>
<feature type="helix" evidence="28">
    <location>
        <begin position="209"/>
        <end position="212"/>
    </location>
</feature>
<feature type="helix" evidence="38">
    <location>
        <begin position="213"/>
        <end position="215"/>
    </location>
</feature>
<feature type="strand" evidence="28">
    <location>
        <begin position="216"/>
        <end position="218"/>
    </location>
</feature>
<feature type="strand" evidence="28">
    <location>
        <begin position="220"/>
        <end position="226"/>
    </location>
</feature>
<feature type="strand" evidence="41">
    <location>
        <begin position="229"/>
        <end position="235"/>
    </location>
</feature>
<feature type="helix" evidence="28">
    <location>
        <begin position="241"/>
        <end position="243"/>
    </location>
</feature>
<feature type="helix" evidence="28">
    <location>
        <begin position="246"/>
        <end position="252"/>
    </location>
</feature>
<feature type="helix" evidence="29">
    <location>
        <begin position="256"/>
        <end position="259"/>
    </location>
</feature>
<feature type="strand" evidence="29">
    <location>
        <begin position="263"/>
        <end position="265"/>
    </location>
</feature>
<feature type="helix" evidence="42">
    <location>
        <begin position="267"/>
        <end position="269"/>
    </location>
</feature>
<feature type="strand" evidence="28">
    <location>
        <begin position="271"/>
        <end position="274"/>
    </location>
</feature>
<feature type="strand" evidence="41">
    <location>
        <begin position="283"/>
        <end position="285"/>
    </location>
</feature>
<feature type="helix" evidence="28">
    <location>
        <begin position="287"/>
        <end position="289"/>
    </location>
</feature>
<feature type="helix" evidence="28">
    <location>
        <begin position="291"/>
        <end position="298"/>
    </location>
</feature>
<feature type="strand" evidence="28">
    <location>
        <begin position="303"/>
        <end position="308"/>
    </location>
</feature>
<feature type="helix" evidence="28">
    <location>
        <begin position="313"/>
        <end position="316"/>
    </location>
</feature>
<feature type="helix" evidence="46">
    <location>
        <begin position="329"/>
        <end position="331"/>
    </location>
</feature>
<feature type="helix" evidence="45">
    <location>
        <begin position="336"/>
        <end position="339"/>
    </location>
</feature>
<feature type="strand" evidence="45">
    <location>
        <begin position="346"/>
        <end position="348"/>
    </location>
</feature>
<feature type="strand" evidence="45">
    <location>
        <begin position="351"/>
        <end position="353"/>
    </location>
</feature>
<feature type="helix" evidence="36">
    <location>
        <begin position="354"/>
        <end position="356"/>
    </location>
</feature>
<feature type="strand" evidence="28">
    <location>
        <begin position="359"/>
        <end position="369"/>
    </location>
</feature>
<feature type="strand" evidence="37">
    <location>
        <begin position="375"/>
        <end position="377"/>
    </location>
</feature>
<feature type="strand" evidence="28">
    <location>
        <begin position="380"/>
        <end position="391"/>
    </location>
</feature>
<feature type="strand" evidence="28">
    <location>
        <begin position="393"/>
        <end position="398"/>
    </location>
</feature>
<feature type="strand" evidence="28">
    <location>
        <begin position="406"/>
        <end position="419"/>
    </location>
</feature>
<feature type="helix" evidence="28">
    <location>
        <begin position="420"/>
        <end position="422"/>
    </location>
</feature>
<feature type="strand" evidence="28">
    <location>
        <begin position="428"/>
        <end position="434"/>
    </location>
</feature>
<feature type="strand" evidence="28">
    <location>
        <begin position="462"/>
        <end position="469"/>
    </location>
</feature>
<feature type="strand" evidence="36">
    <location>
        <begin position="473"/>
        <end position="475"/>
    </location>
</feature>
<feature type="strand" evidence="28">
    <location>
        <begin position="478"/>
        <end position="483"/>
    </location>
</feature>
<feature type="strand" evidence="40">
    <location>
        <begin position="484"/>
        <end position="486"/>
    </location>
</feature>
<feature type="helix" evidence="28">
    <location>
        <begin position="499"/>
        <end position="502"/>
    </location>
</feature>
<feature type="strand" evidence="28">
    <location>
        <begin position="511"/>
        <end position="513"/>
    </location>
</feature>
<feature type="strand" evidence="28">
    <location>
        <begin position="515"/>
        <end position="520"/>
    </location>
</feature>
<feature type="turn" evidence="45">
    <location>
        <begin position="537"/>
        <end position="540"/>
    </location>
</feature>
<feature type="helix" evidence="28">
    <location>
        <begin position="549"/>
        <end position="560"/>
    </location>
</feature>
<feature type="strand" evidence="44">
    <location>
        <begin position="563"/>
        <end position="565"/>
    </location>
</feature>
<feature type="helix" evidence="28">
    <location>
        <begin position="569"/>
        <end position="577"/>
    </location>
</feature>
<feature type="helix" evidence="28">
    <location>
        <begin position="579"/>
        <end position="582"/>
    </location>
</feature>
<feature type="helix" evidence="28">
    <location>
        <begin position="586"/>
        <end position="588"/>
    </location>
</feature>
<feature type="helix" evidence="28">
    <location>
        <begin position="589"/>
        <end position="593"/>
    </location>
</feature>
<feature type="helix" evidence="28">
    <location>
        <begin position="601"/>
        <end position="612"/>
    </location>
</feature>
<feature type="helix" evidence="28">
    <location>
        <begin position="615"/>
        <end position="618"/>
    </location>
</feature>
<feature type="helix" evidence="28">
    <location>
        <begin position="624"/>
        <end position="630"/>
    </location>
</feature>
<feature type="strand" evidence="29">
    <location>
        <begin position="632"/>
        <end position="634"/>
    </location>
</feature>
<feature type="helix" evidence="28">
    <location>
        <begin position="638"/>
        <end position="648"/>
    </location>
</feature>
<feature type="helix" evidence="28">
    <location>
        <begin position="653"/>
        <end position="666"/>
    </location>
</feature>
<feature type="helix" evidence="28">
    <location>
        <begin position="667"/>
        <end position="669"/>
    </location>
</feature>
<feature type="strand" evidence="28">
    <location>
        <begin position="671"/>
        <end position="674"/>
    </location>
</feature>
<feature type="helix" evidence="28">
    <location>
        <begin position="676"/>
        <end position="687"/>
    </location>
</feature>
<feature type="helix" evidence="28">
    <location>
        <begin position="689"/>
        <end position="705"/>
    </location>
</feature>
<feature type="turn" evidence="28">
    <location>
        <begin position="707"/>
        <end position="709"/>
    </location>
</feature>
<feature type="helix" evidence="28">
    <location>
        <begin position="710"/>
        <end position="721"/>
    </location>
</feature>
<feature type="turn" evidence="34">
    <location>
        <begin position="722"/>
        <end position="724"/>
    </location>
</feature>
<feature type="helix" evidence="28">
    <location>
        <begin position="726"/>
        <end position="751"/>
    </location>
</feature>
<feature type="strand" evidence="28">
    <location>
        <begin position="755"/>
        <end position="757"/>
    </location>
</feature>
<feature type="helix" evidence="28">
    <location>
        <begin position="761"/>
        <end position="774"/>
    </location>
</feature>
<feature type="turn" evidence="28">
    <location>
        <begin position="775"/>
        <end position="778"/>
    </location>
</feature>
<feature type="strand" evidence="28">
    <location>
        <begin position="783"/>
        <end position="785"/>
    </location>
</feature>
<feature type="strand" evidence="28">
    <location>
        <begin position="788"/>
        <end position="796"/>
    </location>
</feature>
<feature type="helix" evidence="28">
    <location>
        <begin position="798"/>
        <end position="800"/>
    </location>
</feature>
<feature type="strand" evidence="28">
    <location>
        <begin position="806"/>
        <end position="808"/>
    </location>
</feature>
<feature type="strand" evidence="28">
    <location>
        <begin position="811"/>
        <end position="818"/>
    </location>
</feature>
<feature type="strand" evidence="43">
    <location>
        <begin position="819"/>
        <end position="821"/>
    </location>
</feature>
<feature type="strand" evidence="28">
    <location>
        <begin position="828"/>
        <end position="836"/>
    </location>
</feature>
<feature type="helix" evidence="28">
    <location>
        <begin position="838"/>
        <end position="856"/>
    </location>
</feature>
<feature type="turn" evidence="28">
    <location>
        <begin position="857"/>
        <end position="859"/>
    </location>
</feature>
<feature type="strand" evidence="28">
    <location>
        <begin position="869"/>
        <end position="873"/>
    </location>
</feature>
<feature type="strand" evidence="28">
    <location>
        <begin position="876"/>
        <end position="880"/>
    </location>
</feature>
<feature type="strand" evidence="28">
    <location>
        <begin position="885"/>
        <end position="887"/>
    </location>
</feature>
<feature type="helix" evidence="28">
    <location>
        <begin position="888"/>
        <end position="895"/>
    </location>
</feature>
<feature type="strand" evidence="33">
    <location>
        <begin position="898"/>
        <end position="900"/>
    </location>
</feature>
<feature type="helix" evidence="28">
    <location>
        <begin position="906"/>
        <end position="914"/>
    </location>
</feature>
<feature type="strand" evidence="30">
    <location>
        <begin position="915"/>
        <end position="917"/>
    </location>
</feature>
<feature type="helix" evidence="28">
    <location>
        <begin position="918"/>
        <end position="941"/>
    </location>
</feature>
<feature type="helix" evidence="28">
    <location>
        <begin position="949"/>
        <end position="951"/>
    </location>
</feature>
<feature type="strand" evidence="28">
    <location>
        <begin position="952"/>
        <end position="955"/>
    </location>
</feature>
<feature type="turn" evidence="29">
    <location>
        <begin position="956"/>
        <end position="958"/>
    </location>
</feature>
<feature type="strand" evidence="28">
    <location>
        <begin position="960"/>
        <end position="962"/>
    </location>
</feature>
<feature type="helix" evidence="32">
    <location>
        <begin position="965"/>
        <end position="970"/>
    </location>
</feature>
<feature type="turn" evidence="45">
    <location>
        <begin position="976"/>
        <end position="979"/>
    </location>
</feature>
<feature type="helix" evidence="28">
    <location>
        <begin position="989"/>
        <end position="994"/>
    </location>
</feature>
<feature type="turn" evidence="36">
    <location>
        <begin position="998"/>
        <end position="1000"/>
    </location>
</feature>
<feature type="helix" evidence="28">
    <location>
        <begin position="1004"/>
        <end position="1021"/>
    </location>
</feature>
<feature type="helix" evidence="28">
    <location>
        <begin position="1024"/>
        <end position="1038"/>
    </location>
</feature>
<feature type="strand" evidence="28">
    <location>
        <begin position="1039"/>
        <end position="1041"/>
    </location>
</feature>
<feature type="turn" evidence="35">
    <location>
        <begin position="1042"/>
        <end position="1045"/>
    </location>
</feature>
<feature type="helix" evidence="28">
    <location>
        <begin position="1046"/>
        <end position="1054"/>
    </location>
</feature>
<feature type="turn" evidence="28">
    <location>
        <begin position="1055"/>
        <end position="1058"/>
    </location>
</feature>
<feature type="helix" evidence="28">
    <location>
        <begin position="1061"/>
        <end position="1078"/>
    </location>
</feature>
<feature type="helix" evidence="28">
    <location>
        <begin position="1081"/>
        <end position="1085"/>
    </location>
</feature>
<feature type="turn" evidence="39">
    <location>
        <begin position="1090"/>
        <end position="1092"/>
    </location>
</feature>
<name>PK3CG_HUMAN</name>
<comment type="function">
    <text evidence="2 8 10 12 13 15 16 18 19 20 21">Phosphoinositide-3-kinase (PI3K) that phosphorylates PtdIns(4,5)P2 (Phosphatidylinositol 4,5-bisphosphate) to generate phosphatidylinositol 3,4,5-trisphosphate (PIP3). PIP3 plays a key role by recruiting PH domain-containing proteins to the membrane, including AKT1 and PDPK1, activating signaling cascades involved in cell growth, survival, proliferation, motility and morphology. Links G-protein coupled receptor activation to PIP3 production. Involved in immune, inflammatory and allergic responses. Modulates leukocyte chemotaxis to inflammatory sites and in response to chemoattractant agents. May control leukocyte polarization and migration by regulating the spatial accumulation of PIP3 and by regulating the organization of F-actin formation and integrin-based adhesion at the leading edge. Controls motility of dendritic cells. Together with PIK3CD is involved in natural killer (NK) cell development and migration towards the sites of inflammation. Participates in T-lymphocyte migration. Regulates T-lymphocyte proliferation, activation, and cytokine production. Together with PIK3CD participates in T-lymphocyte development. Required for B-lymphocyte development and signaling. Together with PIK3CD participates in neutrophil respiratory burst. Together with PIK3CD is involved in neutrophil chemotaxis and extravasation. Together with PIK3CB promotes platelet aggregation and thrombosis. Regulates alpha-IIb/beta-3 integrins (ITGA2B/ ITGB3) adhesive function in platelets downstream of P2Y12 through a lipid kinase activity-independent mechanism. May have also a lipid kinase activity-dependent function in platelet aggregation. Involved in endothelial progenitor cell migration. Negative regulator of cardiac contractility. Modulates cardiac contractility by anchoring protein kinase A (PKA) and PDE3B activation, reducing cAMP levels. Regulates cardiac contractility also by promoting beta-adrenergic receptor internalization by binding to GRK2 and by non-muscle tropomyosin phosphorylation. Also has serine/threonine protein kinase activity: both lipid and protein kinase activities are required for beta-adrenergic receptor endocytosis. May also have a scaffolding role in modulating cardiac contractility. Contributes to cardiac hypertrophy under pathological stress. Through simultaneous binding of PDE3B to RAPGEF3 and PIK3R6 is assembled in a signaling complex in which the PI3K gamma complex is activated by RAPGEF3 and which is involved in angiogenesis. In neutrophils, participates in a phospholipase C-activating N-formyl peptide-activated GPCR (G protein-coupled receptor) signaling pathway downstream of RASGRP4-mediated Ras-activation, to promote neutrophil functional responses (By similarity).</text>
</comment>
<comment type="catalytic activity">
    <reaction evidence="8 16">
        <text>a 1,2-diacyl-sn-glycero-3-phospho-(1D-myo-inositol) + ATP = a 1,2-diacyl-sn-glycero-3-phospho-(1D-myo-inositol-3-phosphate) + ADP + H(+)</text>
        <dbReference type="Rhea" id="RHEA:12709"/>
        <dbReference type="ChEBI" id="CHEBI:15378"/>
        <dbReference type="ChEBI" id="CHEBI:30616"/>
        <dbReference type="ChEBI" id="CHEBI:57880"/>
        <dbReference type="ChEBI" id="CHEBI:58088"/>
        <dbReference type="ChEBI" id="CHEBI:456216"/>
        <dbReference type="EC" id="2.7.1.137"/>
    </reaction>
    <physiologicalReaction direction="left-to-right" evidence="23">
        <dbReference type="Rhea" id="RHEA:12710"/>
    </physiologicalReaction>
</comment>
<comment type="catalytic activity">
    <reaction evidence="12 16 19">
        <text>a 1,2-diacyl-sn-glycero-3-phospho-(1D-myo-inositol-4,5-bisphosphate) + ATP = a 1,2-diacyl-sn-glycero-3-phospho-(1D-myo-inositol-3,4,5-trisphosphate) + ADP + H(+)</text>
        <dbReference type="Rhea" id="RHEA:21292"/>
        <dbReference type="ChEBI" id="CHEBI:15378"/>
        <dbReference type="ChEBI" id="CHEBI:30616"/>
        <dbReference type="ChEBI" id="CHEBI:57836"/>
        <dbReference type="ChEBI" id="CHEBI:58456"/>
        <dbReference type="ChEBI" id="CHEBI:456216"/>
        <dbReference type="EC" id="2.7.1.153"/>
    </reaction>
    <physiologicalReaction direction="left-to-right" evidence="25">
        <dbReference type="Rhea" id="RHEA:21293"/>
    </physiologicalReaction>
</comment>
<comment type="catalytic activity">
    <reaction evidence="16">
        <text>a 1,2-diacyl-sn-glycero-3-phospho-(1D-myo-inositol 4-phosphate) + ATP = a 1,2-diacyl-sn-glycero-3-phospho-(1D-myo-inositol-3,4-bisphosphate) + ADP + H(+)</text>
        <dbReference type="Rhea" id="RHEA:18373"/>
        <dbReference type="ChEBI" id="CHEBI:15378"/>
        <dbReference type="ChEBI" id="CHEBI:30616"/>
        <dbReference type="ChEBI" id="CHEBI:57658"/>
        <dbReference type="ChEBI" id="CHEBI:58178"/>
        <dbReference type="ChEBI" id="CHEBI:456216"/>
        <dbReference type="EC" id="2.7.1.154"/>
    </reaction>
    <physiologicalReaction direction="left-to-right" evidence="26">
        <dbReference type="Rhea" id="RHEA:18374"/>
    </physiologicalReaction>
</comment>
<comment type="catalytic activity">
    <reaction evidence="11 15">
        <text>L-seryl-[protein] + ATP = O-phospho-L-seryl-[protein] + ADP + H(+)</text>
        <dbReference type="Rhea" id="RHEA:17989"/>
        <dbReference type="Rhea" id="RHEA-COMP:9863"/>
        <dbReference type="Rhea" id="RHEA-COMP:11604"/>
        <dbReference type="ChEBI" id="CHEBI:15378"/>
        <dbReference type="ChEBI" id="CHEBI:29999"/>
        <dbReference type="ChEBI" id="CHEBI:30616"/>
        <dbReference type="ChEBI" id="CHEBI:83421"/>
        <dbReference type="ChEBI" id="CHEBI:456216"/>
        <dbReference type="EC" id="2.7.11.1"/>
    </reaction>
    <physiologicalReaction direction="left-to-right" evidence="24">
        <dbReference type="Rhea" id="RHEA:17990"/>
    </physiologicalReaction>
</comment>
<comment type="activity regulation">
    <text evidence="17 21">Activated by both the alpha and the beta-gamma G proteins following stimulation of G protein-coupled receptors (GPCRs). Activation by GPCRs is assisted by the regulatory subunits (PIK3R5 or PIK3R6) leading to the translocation from the cytosol to the plasma membrane and to kinase activation. Inhibited by AS-604850 and AS-605240.</text>
</comment>
<comment type="pathway">
    <text evidence="23 25 26">Phospholipid metabolism; phosphatidylinositol phosphate biosynthesis.</text>
</comment>
<comment type="subunit">
    <text evidence="2 9 10 14 15">Heterodimer of a catalytic subunit PIK3CG and a PIK3R5 or PIK3R6 regulatory subunit. Interacts with GRK2 through the PIK helical domain. Interaction with GRK2 is required for targeting to agonist-occupied receptor. Interacts with PDE3B; regulates PDE3B activity and thereby cAMP levels in cells (By similarity). Interacts with TPM2. Interacts with EPHA8; regulates integrin-mediated cell adhesion to substrate. Interacts with HRAS; the interaction is required for membrane recruitment and beta-gamma G protein dimer-dependent activation of the PI3K gamma complex PIK3CG:PIK3R6 (By similarity).</text>
</comment>
<comment type="interaction">
    <interactant intactId="EBI-1030384">
        <id>P48736</id>
    </interactant>
    <interactant intactId="EBI-77613">
        <id>P05067</id>
        <label>APP</label>
    </interactant>
    <organismsDiffer>false</organismsDiffer>
    <experiments>3</experiments>
</comment>
<comment type="interaction">
    <interactant intactId="EBI-1030384">
        <id>P48736</id>
    </interactant>
    <interactant intactId="EBI-6172856">
        <id>Q13370</id>
        <label>PDE3B</label>
    </interactant>
    <organismsDiffer>false</organismsDiffer>
    <experiments>3</experiments>
</comment>
<comment type="interaction">
    <interactant intactId="EBI-1030384">
        <id>P48736</id>
    </interactant>
    <interactant intactId="EBI-1030384">
        <id>P48736</id>
        <label>PIK3CG</label>
    </interactant>
    <organismsDiffer>false</organismsDiffer>
    <experiments>2</experiments>
</comment>
<comment type="interaction">
    <interactant intactId="EBI-1030384">
        <id>P48736</id>
    </interactant>
    <interactant intactId="EBI-6172343">
        <id>O02696</id>
        <label>PIK3R5</label>
    </interactant>
    <organismsDiffer>true</organismsDiffer>
    <experiments>6</experiments>
</comment>
<comment type="interaction">
    <interactant intactId="EBI-1030384">
        <id>P48736</id>
    </interactant>
    <interactant intactId="EBI-4303950">
        <id>Q3U6Q4</id>
        <label>Pik3r6</label>
    </interactant>
    <organismsDiffer>true</organismsDiffer>
    <experiments>6</experiments>
</comment>
<comment type="interaction">
    <interactant intactId="EBI-1030384">
        <id>P48736</id>
    </interactant>
    <interactant intactId="EBI-16063464">
        <id>P68404-2</id>
        <label>Prkcb</label>
    </interactant>
    <organismsDiffer>true</organismsDiffer>
    <experiments>2</experiments>
</comment>
<comment type="subcellular location">
    <subcellularLocation>
        <location evidence="10">Cytoplasm</location>
    </subcellularLocation>
    <subcellularLocation>
        <location evidence="10">Cell membrane</location>
    </subcellularLocation>
</comment>
<comment type="tissue specificity">
    <text evidence="21">Pancreas, skeletal muscle, liver and heart.</text>
</comment>
<comment type="PTM">
    <text evidence="11">Autophosphorylation at Ser-1101 has no effect on the phosphatidylinositol-4,5-bisphosphate 3-kinase activity.</text>
</comment>
<comment type="disease" evidence="19 20">
    <disease id="DI-06382">
        <name>Immunodeficiency 97 with autoinflammation</name>
        <acronym>IMD97</acronym>
        <description>An autosomal recessive disorder with variable features. Affected individuals have childhood-onset antibody defects, cytopenias, and T lymphocytic pneumonitis and colitis. Some patients may have features of hemophagocytic lymphohistiocytosis.</description>
        <dbReference type="MIM" id="619802"/>
    </disease>
    <text>The disease is caused by variants affecting the gene represented in this entry.</text>
</comment>
<comment type="miscellaneous">
    <text evidence="27">Candidate target in therapy for inflammatory diseases. Selective inhibitors and protein ablation are anti-inflammatory in multiple disease models such as asthma, rheumatoid arthritis, allergy, systemic lupus erythematosus, airway inflammation, lung injury and pancreatitis (PubMed:18278175).</text>
</comment>
<comment type="similarity">
    <text evidence="4 6 7">Belongs to the PI3/PI4-kinase family.</text>
</comment>
<proteinExistence type="evidence at protein level"/>
<protein>
    <recommendedName>
        <fullName>Phosphatidylinositol 4,5-bisphosphate 3-kinase catalytic subunit gamma isoform</fullName>
        <shortName>PI3-kinase subunit gamma</shortName>
        <shortName>PI3K-gamma</shortName>
        <shortName>PI3Kgamma</shortName>
        <shortName>PtdIns-3-kinase subunit gamma</shortName>
        <ecNumber evidence="8 16">2.7.1.137</ecNumber>
        <ecNumber evidence="12 16">2.7.1.153</ecNumber>
        <ecNumber evidence="16">2.7.1.154</ecNumber>
    </recommendedName>
    <alternativeName>
        <fullName>Phosphatidylinositol 4,5-bisphosphate 3-kinase 110 kDa catalytic subunit gamma</fullName>
        <shortName>PtdIns-3-kinase subunit p110-gamma</shortName>
        <shortName>p110gamma</shortName>
    </alternativeName>
    <alternativeName>
        <fullName>Phosphoinositide-3-kinase catalytic gamma polypeptide</fullName>
    </alternativeName>
    <alternativeName>
        <fullName evidence="24">Serine/threonine protein kinase PIK3CG</fullName>
        <ecNumber evidence="11 15">2.7.11.1</ecNumber>
    </alternativeName>
    <alternativeName>
        <fullName>p120-PI3K</fullName>
    </alternativeName>
</protein>
<reference key="1">
    <citation type="journal article" date="1995" name="Science">
        <title>Cloning and characterization of a G protein-activated human phosphoinositide-3 kinase.</title>
        <authorList>
            <person name="Stoyanov B."/>
            <person name="Volinia S."/>
            <person name="Hanck T."/>
            <person name="Rubio I."/>
            <person name="Loubtchenkov M."/>
            <person name="Malek D."/>
            <person name="Stoyanova S."/>
            <person name="Vanhaesebroeck B."/>
            <person name="Dhand R."/>
            <person name="Nuernberg B."/>
            <person name="Gierschik P."/>
            <person name="Seedorf K."/>
            <person name="Hsuan J.J."/>
            <person name="Waterfield M.D."/>
            <person name="Wetzker R."/>
        </authorList>
    </citation>
    <scope>NUCLEOTIDE SEQUENCE [MRNA]</scope>
    <scope>FUNCTION</scope>
    <scope>ACTIVITY REGULATION</scope>
    <scope>TISSUE SPECIFICITY</scope>
</reference>
<reference key="2">
    <citation type="submission" date="1996-08" db="EMBL/GenBank/DDBJ databases">
        <authorList>
            <person name="Waterfield M.D."/>
        </authorList>
    </citation>
    <scope>SEQUENCE REVISION</scope>
</reference>
<reference key="3">
    <citation type="submission" date="2000-12" db="EMBL/GenBank/DDBJ databases">
        <title>Regulation of a G-protein-activated phosphoinositide-3-kinase.</title>
        <authorList>
            <person name="Michalke M."/>
            <person name="Schaefer M."/>
            <person name="Stoyanov B."/>
            <person name="Wetzker R."/>
            <person name="Nuernberg B."/>
        </authorList>
    </citation>
    <scope>NUCLEOTIDE SEQUENCE [MRNA]</scope>
</reference>
<reference key="4">
    <citation type="journal article" date="2003" name="Nature">
        <title>The DNA sequence of human chromosome 7.</title>
        <authorList>
            <person name="Hillier L.W."/>
            <person name="Fulton R.S."/>
            <person name="Fulton L.A."/>
            <person name="Graves T.A."/>
            <person name="Pepin K.H."/>
            <person name="Wagner-McPherson C."/>
            <person name="Layman D."/>
            <person name="Maas J."/>
            <person name="Jaeger S."/>
            <person name="Walker R."/>
            <person name="Wylie K."/>
            <person name="Sekhon M."/>
            <person name="Becker M.C."/>
            <person name="O'Laughlin M.D."/>
            <person name="Schaller M.E."/>
            <person name="Fewell G.A."/>
            <person name="Delehaunty K.D."/>
            <person name="Miner T.L."/>
            <person name="Nash W.E."/>
            <person name="Cordes M."/>
            <person name="Du H."/>
            <person name="Sun H."/>
            <person name="Edwards J."/>
            <person name="Bradshaw-Cordum H."/>
            <person name="Ali J."/>
            <person name="Andrews S."/>
            <person name="Isak A."/>
            <person name="Vanbrunt A."/>
            <person name="Nguyen C."/>
            <person name="Du F."/>
            <person name="Lamar B."/>
            <person name="Courtney L."/>
            <person name="Kalicki J."/>
            <person name="Ozersky P."/>
            <person name="Bielicki L."/>
            <person name="Scott K."/>
            <person name="Holmes A."/>
            <person name="Harkins R."/>
            <person name="Harris A."/>
            <person name="Strong C.M."/>
            <person name="Hou S."/>
            <person name="Tomlinson C."/>
            <person name="Dauphin-Kohlberg S."/>
            <person name="Kozlowicz-Reilly A."/>
            <person name="Leonard S."/>
            <person name="Rohlfing T."/>
            <person name="Rock S.M."/>
            <person name="Tin-Wollam A.-M."/>
            <person name="Abbott A."/>
            <person name="Minx P."/>
            <person name="Maupin R."/>
            <person name="Strowmatt C."/>
            <person name="Latreille P."/>
            <person name="Miller N."/>
            <person name="Johnson D."/>
            <person name="Murray J."/>
            <person name="Woessner J.P."/>
            <person name="Wendl M.C."/>
            <person name="Yang S.-P."/>
            <person name="Schultz B.R."/>
            <person name="Wallis J.W."/>
            <person name="Spieth J."/>
            <person name="Bieri T.A."/>
            <person name="Nelson J.O."/>
            <person name="Berkowicz N."/>
            <person name="Wohldmann P.E."/>
            <person name="Cook L.L."/>
            <person name="Hickenbotham M.T."/>
            <person name="Eldred J."/>
            <person name="Williams D."/>
            <person name="Bedell J.A."/>
            <person name="Mardis E.R."/>
            <person name="Clifton S.W."/>
            <person name="Chissoe S.L."/>
            <person name="Marra M.A."/>
            <person name="Raymond C."/>
            <person name="Haugen E."/>
            <person name="Gillett W."/>
            <person name="Zhou Y."/>
            <person name="James R."/>
            <person name="Phelps K."/>
            <person name="Iadanoto S."/>
            <person name="Bubb K."/>
            <person name="Simms E."/>
            <person name="Levy R."/>
            <person name="Clendenning J."/>
            <person name="Kaul R."/>
            <person name="Kent W.J."/>
            <person name="Furey T.S."/>
            <person name="Baertsch R.A."/>
            <person name="Brent M.R."/>
            <person name="Keibler E."/>
            <person name="Flicek P."/>
            <person name="Bork P."/>
            <person name="Suyama M."/>
            <person name="Bailey J.A."/>
            <person name="Portnoy M.E."/>
            <person name="Torrents D."/>
            <person name="Chinwalla A.T."/>
            <person name="Gish W.R."/>
            <person name="Eddy S.R."/>
            <person name="McPherson J.D."/>
            <person name="Olson M.V."/>
            <person name="Eichler E.E."/>
            <person name="Green E.D."/>
            <person name="Waterston R.H."/>
            <person name="Wilson R.K."/>
        </authorList>
    </citation>
    <scope>NUCLEOTIDE SEQUENCE [LARGE SCALE GENOMIC DNA]</scope>
</reference>
<reference key="5">
    <citation type="journal article" date="2003" name="Science">
        <title>Human chromosome 7: DNA sequence and biology.</title>
        <authorList>
            <person name="Scherer S.W."/>
            <person name="Cheung J."/>
            <person name="MacDonald J.R."/>
            <person name="Osborne L.R."/>
            <person name="Nakabayashi K."/>
            <person name="Herbrick J.-A."/>
            <person name="Carson A.R."/>
            <person name="Parker-Katiraee L."/>
            <person name="Skaug J."/>
            <person name="Khaja R."/>
            <person name="Zhang J."/>
            <person name="Hudek A.K."/>
            <person name="Li M."/>
            <person name="Haddad M."/>
            <person name="Duggan G.E."/>
            <person name="Fernandez B.A."/>
            <person name="Kanematsu E."/>
            <person name="Gentles S."/>
            <person name="Christopoulos C.C."/>
            <person name="Choufani S."/>
            <person name="Kwasnicka D."/>
            <person name="Zheng X.H."/>
            <person name="Lai Z."/>
            <person name="Nusskern D.R."/>
            <person name="Zhang Q."/>
            <person name="Gu Z."/>
            <person name="Lu F."/>
            <person name="Zeesman S."/>
            <person name="Nowaczyk M.J."/>
            <person name="Teshima I."/>
            <person name="Chitayat D."/>
            <person name="Shuman C."/>
            <person name="Weksberg R."/>
            <person name="Zackai E.H."/>
            <person name="Grebe T.A."/>
            <person name="Cox S.R."/>
            <person name="Kirkpatrick S.J."/>
            <person name="Rahman N."/>
            <person name="Friedman J.M."/>
            <person name="Heng H.H.Q."/>
            <person name="Pelicci P.G."/>
            <person name="Lo-Coco F."/>
            <person name="Belloni E."/>
            <person name="Shaffer L.G."/>
            <person name="Pober B."/>
            <person name="Morton C.C."/>
            <person name="Gusella J.F."/>
            <person name="Bruns G.A.P."/>
            <person name="Korf B.R."/>
            <person name="Quade B.J."/>
            <person name="Ligon A.H."/>
            <person name="Ferguson H."/>
            <person name="Higgins A.W."/>
            <person name="Leach N.T."/>
            <person name="Herrick S.R."/>
            <person name="Lemyre E."/>
            <person name="Farra C.G."/>
            <person name="Kim H.-G."/>
            <person name="Summers A.M."/>
            <person name="Gripp K.W."/>
            <person name="Roberts W."/>
            <person name="Szatmari P."/>
            <person name="Winsor E.J.T."/>
            <person name="Grzeschik K.-H."/>
            <person name="Teebi A."/>
            <person name="Minassian B.A."/>
            <person name="Kere J."/>
            <person name="Armengol L."/>
            <person name="Pujana M.A."/>
            <person name="Estivill X."/>
            <person name="Wilson M.D."/>
            <person name="Koop B.F."/>
            <person name="Tosi S."/>
            <person name="Moore G.E."/>
            <person name="Boright A.P."/>
            <person name="Zlotorynski E."/>
            <person name="Kerem B."/>
            <person name="Kroisel P.M."/>
            <person name="Petek E."/>
            <person name="Oscier D.G."/>
            <person name="Mould S.J."/>
            <person name="Doehner H."/>
            <person name="Doehner K."/>
            <person name="Rommens J.M."/>
            <person name="Vincent J.B."/>
            <person name="Venter J.C."/>
            <person name="Li P.W."/>
            <person name="Mural R.J."/>
            <person name="Adams M.D."/>
            <person name="Tsui L.-C."/>
        </authorList>
    </citation>
    <scope>NUCLEOTIDE SEQUENCE [LARGE SCALE GENOMIC DNA]</scope>
</reference>
<reference key="6">
    <citation type="submission" date="2005-07" db="EMBL/GenBank/DDBJ databases">
        <authorList>
            <person name="Mural R.J."/>
            <person name="Istrail S."/>
            <person name="Sutton G."/>
            <person name="Florea L."/>
            <person name="Halpern A.L."/>
            <person name="Mobarry C.M."/>
            <person name="Lippert R."/>
            <person name="Walenz B."/>
            <person name="Shatkay H."/>
            <person name="Dew I."/>
            <person name="Miller J.R."/>
            <person name="Flanigan M.J."/>
            <person name="Edwards N.J."/>
            <person name="Bolanos R."/>
            <person name="Fasulo D."/>
            <person name="Halldorsson B.V."/>
            <person name="Hannenhalli S."/>
            <person name="Turner R."/>
            <person name="Yooseph S."/>
            <person name="Lu F."/>
            <person name="Nusskern D.R."/>
            <person name="Shue B.C."/>
            <person name="Zheng X.H."/>
            <person name="Zhong F."/>
            <person name="Delcher A.L."/>
            <person name="Huson D.H."/>
            <person name="Kravitz S.A."/>
            <person name="Mouchard L."/>
            <person name="Reinert K."/>
            <person name="Remington K.A."/>
            <person name="Clark A.G."/>
            <person name="Waterman M.S."/>
            <person name="Eichler E.E."/>
            <person name="Adams M.D."/>
            <person name="Hunkapiller M.W."/>
            <person name="Myers E.W."/>
            <person name="Venter J.C."/>
        </authorList>
    </citation>
    <scope>NUCLEOTIDE SEQUENCE [LARGE SCALE GENOMIC DNA]</scope>
</reference>
<reference key="7">
    <citation type="journal article" date="2004" name="Genome Res.">
        <title>The status, quality, and expansion of the NIH full-length cDNA project: the Mammalian Gene Collection (MGC).</title>
        <authorList>
            <consortium name="The MGC Project Team"/>
        </authorList>
    </citation>
    <scope>NUCLEOTIDE SEQUENCE [LARGE SCALE MRNA]</scope>
    <source>
        <tissue>Pancreas</tissue>
    </source>
</reference>
<reference key="8">
    <citation type="journal article" date="2001" name="Eur. J. Biochem.">
        <title>Human phosphatidylinositol 4-kinase isoform PI4K92. Expression of the recombinant enzyme and determination of multiple phosphorylation sites.</title>
        <authorList>
            <person name="Suer S."/>
            <person name="Sickmann A."/>
            <person name="Meyer H.E."/>
            <person name="Herberg F.W."/>
            <person name="Heilmeyer L.M.G. Jr."/>
        </authorList>
    </citation>
    <scope>FUNCTION</scope>
    <scope>CATALYTIC ACTIVITY</scope>
    <scope>PATHWAY</scope>
</reference>
<reference key="9">
    <citation type="journal article" date="2001" name="Mol. Cell. Biol.">
        <title>The EphA8 receptor regulates integrin activity through p110gamma phosphatidylinositol-3 kinase in a tyrosine kinase activity-independent manner.</title>
        <authorList>
            <person name="Gu C."/>
            <person name="Park S."/>
        </authorList>
    </citation>
    <scope>INTERACTION WITH EPHA8</scope>
</reference>
<reference key="10">
    <citation type="journal article" date="2002" name="J. Cell Biol.">
        <title>Phosphoinositide 3-kinase regulates beta2-adrenergic receptor endocytosis by AP-2 recruitment to the receptor/beta-arrestin complex.</title>
        <authorList>
            <person name="Naga Prasad S.V."/>
            <person name="Laporte S.A."/>
            <person name="Chamberlain D."/>
            <person name="Caron M.G."/>
            <person name="Barak L."/>
            <person name="Rockman H.A."/>
        </authorList>
    </citation>
    <scope>FUNCTION</scope>
    <scope>SUBCELLULAR LOCATION</scope>
    <scope>INTERACTION WITH GRK2</scope>
</reference>
<reference key="11">
    <citation type="journal article" date="2003" name="J. Biol. Chem.">
        <title>Identification and characterization of the autophosphorylation sites of phosphoinositide 3-kinase isoforms beta and gamma.</title>
        <authorList>
            <person name="Czupalla C."/>
            <person name="Culo M."/>
            <person name="Muller E.C."/>
            <person name="Brock C."/>
            <person name="Reusch H.P."/>
            <person name="Spicher K."/>
            <person name="Krause E."/>
            <person name="Nurnberg B."/>
        </authorList>
    </citation>
    <scope>CATALYTIC ACTIVITY</scope>
    <scope>PHOSPHORYLATION AT SER-1101</scope>
    <scope>MUTAGENESIS OF SER-1101</scope>
</reference>
<reference key="12">
    <citation type="journal article" date="2004" name="Cell">
        <title>PI3Kgamma modulates the cardiac response to chronic pressure overload by distinct kinase-dependent and -independent effects.</title>
        <authorList>
            <person name="Patrucco E."/>
            <person name="Notte A."/>
            <person name="Barberis L."/>
            <person name="Selvetella G."/>
            <person name="Maffei A."/>
            <person name="Brancaccio M."/>
            <person name="Marengo S."/>
            <person name="Russo G."/>
            <person name="Azzolino O."/>
            <person name="Rybalkin S.D."/>
            <person name="Silengo L."/>
            <person name="Altruda F."/>
            <person name="Wetzker R."/>
            <person name="Wymann M.P."/>
            <person name="Lembo G."/>
            <person name="Hirsch E."/>
        </authorList>
    </citation>
    <scope>FUNCTION IN CARDIAC CONTRACTILITY</scope>
    <scope>MUTAGENESIS OF LYS-833</scope>
</reference>
<reference key="13">
    <citation type="journal article" date="2004" name="Protein Expr. Purif.">
        <title>Cloning, expression, purification, and characterization of the human Class Ia phosphoinositide 3-kinase isoforms.</title>
        <authorList>
            <person name="Meier T.I."/>
            <person name="Cook J.A."/>
            <person name="Thomas J.E."/>
            <person name="Radding J.A."/>
            <person name="Horn C."/>
            <person name="Lingaraj T."/>
            <person name="Smith M.C."/>
        </authorList>
    </citation>
    <scope>FUNCTION</scope>
    <scope>CATALYTIC ACTIVITY</scope>
    <scope>PATHWAY</scope>
</reference>
<reference key="14">
    <citation type="journal article" date="2005" name="Curr. Biol.">
        <title>p84, a new Gbetagamma-activated regulatory subunit of the type IB phosphoinositide 3-kinase p110gamma.</title>
        <authorList>
            <person name="Suire S."/>
            <person name="Coadwell J."/>
            <person name="Ferguson G.J."/>
            <person name="Davidson K."/>
            <person name="Hawkins P."/>
            <person name="Stephens L."/>
        </authorList>
    </citation>
    <scope>INTERACTION WITH PIK3R5</scope>
</reference>
<reference key="15">
    <citation type="journal article" date="2005" name="Nat. Cell Biol.">
        <title>Protein kinase activity of phosphoinositide 3-kinase regulates beta-adrenergic receptor endocytosis.</title>
        <authorList>
            <person name="Naga Prasad S.V."/>
            <person name="Jayatilleke A."/>
            <person name="Madamanchi A."/>
            <person name="Rockman H.A."/>
        </authorList>
    </citation>
    <scope>FUNCTION</scope>
    <scope>CATALYTIC ACTIVITY</scope>
    <scope>INTERACTION WITH GRK2 AND TPM2</scope>
    <scope>MUTAGENESIS OF LYS-833 AND ARG-947</scope>
</reference>
<reference key="16">
    <citation type="journal article" date="2005" name="Proc. Natl. Acad. Sci. U.S.A.">
        <title>Inositol polyphosphate multikinase is a nuclear PI3-kinase with transcriptional regulatory activity.</title>
        <authorList>
            <person name="Resnick A.C."/>
            <person name="Snowman A.M."/>
            <person name="Kang B.N."/>
            <person name="Hurt K.J."/>
            <person name="Snyder S.H."/>
            <person name="Saiardi A."/>
        </authorList>
    </citation>
    <scope>FUNCTION</scope>
    <scope>CATALYTIC ACTIVITY</scope>
    <scope>PATHWAY</scope>
</reference>
<reference key="17">
    <citation type="journal article" date="2007" name="Nat. Rev. Immunol.">
        <title>PI3K delta and PI3K gamma: partners in crime in inflammation in rheumatoid arthritis and beyond?</title>
        <authorList>
            <person name="Rommel C."/>
            <person name="Camps M."/>
            <person name="Ji H."/>
        </authorList>
    </citation>
    <scope>REVIEW ON FUNCTION</scope>
</reference>
<reference key="18">
    <citation type="journal article" date="2008" name="Thromb. Haemost.">
        <title>Targeting phosphoinositide 3-kinase gamma to fight inflammation and more.</title>
        <authorList>
            <person name="Barberis L."/>
            <person name="Hirsch E."/>
        </authorList>
    </citation>
    <scope>REVIEW ON FUNCTION IN LEUKOCYTES AND ENDOTHELIAL CELLS</scope>
    <scope>REVIEW ON ANTINFLAMMATORY THERAPY TARGET</scope>
</reference>
<reference key="19">
    <citation type="journal article" date="2009" name="Cardiovasc. Res.">
        <title>Cardiac regulation by phosphoinositide 3-kinases and PTEN.</title>
        <authorList>
            <person name="Oudit G.Y."/>
            <person name="Penninger J.M."/>
        </authorList>
    </citation>
    <scope>REVIEW ON FUNCTION IN CARDIAC CONTRACTILITY</scope>
</reference>
<reference key="20">
    <citation type="journal article" date="2011" name="BMC Syst. Biol.">
        <title>Initial characterization of the human central proteome.</title>
        <authorList>
            <person name="Burkard T.R."/>
            <person name="Planyavsky M."/>
            <person name="Kaupe I."/>
            <person name="Breitwieser F.P."/>
            <person name="Buerckstuemmer T."/>
            <person name="Bennett K.L."/>
            <person name="Superti-Furga G."/>
            <person name="Colinge J."/>
        </authorList>
    </citation>
    <scope>IDENTIFICATION BY MASS SPECTROMETRY [LARGE SCALE ANALYSIS]</scope>
</reference>
<reference key="21">
    <citation type="journal article" date="2011" name="J. Biol. Chem.">
        <title>A phosphodiesterase 3B-based signaling complex integrates exchange protein activated by cAMP 1 and phosphatidylinositol 3-kinase signals in human arterial endothelial cells.</title>
        <authorList>
            <person name="Wilson L.S."/>
            <person name="Baillie G.S."/>
            <person name="Pritchard L.M."/>
            <person name="Umana B."/>
            <person name="Terrin A."/>
            <person name="Zaccolo M."/>
            <person name="Houslay M.D."/>
            <person name="Maurice D.H."/>
        </authorList>
    </citation>
    <scope>FUNCTION</scope>
</reference>
<reference key="22">
    <citation type="journal article" date="1999" name="Nature">
        <title>Structural insights into phosphoinositide 3-kinase catalysis and signalling.</title>
        <authorList>
            <person name="Walker E.H."/>
            <person name="Perisic O."/>
            <person name="Ried C."/>
            <person name="Stephens L."/>
            <person name="Williams R.L."/>
        </authorList>
    </citation>
    <scope>X-RAY CRYSTALLOGRAPHY (2.0 ANGSTROMS) OF 144-1102</scope>
</reference>
<reference key="23">
    <citation type="journal article" date="2005" name="Nat. Med.">
        <title>Blockade of PI3Kgamma suppresses joint inflammation and damage in mouse models of rheumatoid arthritis.</title>
        <authorList>
            <person name="Camps M."/>
            <person name="Rueckle T."/>
            <person name="Ji H."/>
            <person name="Ardissone V."/>
            <person name="Rintelen F."/>
            <person name="Shaw J."/>
            <person name="Ferrandi C."/>
            <person name="Chabert C."/>
            <person name="Gillieron C."/>
            <person name="Francon B."/>
            <person name="Martin T."/>
            <person name="Gretener D."/>
            <person name="Perrin D."/>
            <person name="Leroy D."/>
            <person name="Vitte P.-A."/>
            <person name="Hirsch E."/>
            <person name="Wymann M.P."/>
            <person name="Cirillo R."/>
            <person name="Schwarz M.K."/>
            <person name="Rommel C."/>
        </authorList>
    </citation>
    <scope>X-RAY CRYSTALLOGRAPHY (2.7 ANGSTROMS) OF 144-1101 IN A COMPLEX WITH AS-604850 AND AS-605240</scope>
    <scope>ACTIVITY REGULATION</scope>
</reference>
<reference key="24">
    <citation type="journal article" date="2019" name="Nat. Commun.">
        <title>Human PI3Kgamma deficiency and its microbiota-dependent mouse model reveal immunodeficiency and tissue immunopathology.</title>
        <authorList>
            <person name="Takeda A.J."/>
            <person name="Maher T.J."/>
            <person name="Zhang Y."/>
            <person name="Lanahan S.M."/>
            <person name="Bucklin M.L."/>
            <person name="Compton S.R."/>
            <person name="Tyler P.M."/>
            <person name="Comrie W.A."/>
            <person name="Matsuda M."/>
            <person name="Olivier K.N."/>
            <person name="Pittaluga S."/>
            <person name="McElwee J.J."/>
            <person name="Long Priel D.A."/>
            <person name="Kuhns D.B."/>
            <person name="Williams R.L."/>
            <person name="Mustillo P.J."/>
            <person name="Wymann M.P."/>
            <person name="Koneti Rao V."/>
            <person name="Lucas C.L."/>
        </authorList>
    </citation>
    <scope>VARIANT IMD97 PRO-1021</scope>
    <scope>CHARACTERIZATION OF VARIANT IMD97 PRO-1021</scope>
    <scope>INVOLVEMENT IN IMD97</scope>
    <scope>FUNCTION</scope>
    <scope>CATALYTIC ACTIVITY</scope>
</reference>
<reference key="25">
    <citation type="journal article" date="2020" name="Haematologica">
        <title>Germline biallelic PIK3CG mutations in a multifaceted immunodeficiency with immune dysregulation.</title>
        <authorList>
            <person name="Thian M."/>
            <person name="Hoeger B."/>
            <person name="Kamnev A."/>
            <person name="Poyer F."/>
            <person name="Koestel Bal S."/>
            <person name="Caldera M."/>
            <person name="Jimenez-Heredia R."/>
            <person name="Huemer J."/>
            <person name="Pickl W.F."/>
            <person name="Gross M."/>
            <person name="Ehl S."/>
            <person name="Lucas C.L."/>
            <person name="Menche J."/>
            <person name="Hutter C."/>
            <person name="Attarbaschi A."/>
            <person name="Dupre L."/>
            <person name="Boztug K."/>
        </authorList>
    </citation>
    <scope>VARIANTS IMD97 SER-49 AND SER-1085</scope>
    <scope>CHARACTERIZATION OF VARIANTS IMD97 SER-49 AND SER-1085</scope>
    <scope>INVOLVEMENT IN IMD97</scope>
    <scope>FUNCTION</scope>
</reference>
<keyword id="KW-0002">3D-structure</keyword>
<keyword id="KW-0037">Angiogenesis</keyword>
<keyword id="KW-0067">ATP-binding</keyword>
<keyword id="KW-1003">Cell membrane</keyword>
<keyword id="KW-0145">Chemotaxis</keyword>
<keyword id="KW-0963">Cytoplasm</keyword>
<keyword id="KW-0225">Disease variant</keyword>
<keyword id="KW-0254">Endocytosis</keyword>
<keyword id="KW-0391">Immunity</keyword>
<keyword id="KW-0395">Inflammatory response</keyword>
<keyword id="KW-0418">Kinase</keyword>
<keyword id="KW-0443">Lipid metabolism</keyword>
<keyword id="KW-0472">Membrane</keyword>
<keyword id="KW-0547">Nucleotide-binding</keyword>
<keyword id="KW-0597">Phosphoprotein</keyword>
<keyword id="KW-1267">Proteomics identification</keyword>
<keyword id="KW-1185">Reference proteome</keyword>
<keyword id="KW-0723">Serine/threonine-protein kinase</keyword>
<keyword id="KW-0808">Transferase</keyword>
<evidence type="ECO:0000250" key="1"/>
<evidence type="ECO:0000250" key="2">
    <source>
        <dbReference type="UniProtKB" id="Q9JHG7"/>
    </source>
</evidence>
<evidence type="ECO:0000255" key="3">
    <source>
        <dbReference type="PROSITE-ProRule" id="PRU00269"/>
    </source>
</evidence>
<evidence type="ECO:0000255" key="4">
    <source>
        <dbReference type="PROSITE-ProRule" id="PRU00877"/>
    </source>
</evidence>
<evidence type="ECO:0000255" key="5">
    <source>
        <dbReference type="PROSITE-ProRule" id="PRU00878"/>
    </source>
</evidence>
<evidence type="ECO:0000255" key="6">
    <source>
        <dbReference type="PROSITE-ProRule" id="PRU00879"/>
    </source>
</evidence>
<evidence type="ECO:0000255" key="7">
    <source>
        <dbReference type="PROSITE-ProRule" id="PRU00880"/>
    </source>
</evidence>
<evidence type="ECO:0000269" key="8">
    <source>
    </source>
</evidence>
<evidence type="ECO:0000269" key="9">
    <source>
    </source>
</evidence>
<evidence type="ECO:0000269" key="10">
    <source>
    </source>
</evidence>
<evidence type="ECO:0000269" key="11">
    <source>
    </source>
</evidence>
<evidence type="ECO:0000269" key="12">
    <source>
    </source>
</evidence>
<evidence type="ECO:0000269" key="13">
    <source>
    </source>
</evidence>
<evidence type="ECO:0000269" key="14">
    <source>
    </source>
</evidence>
<evidence type="ECO:0000269" key="15">
    <source>
    </source>
</evidence>
<evidence type="ECO:0000269" key="16">
    <source>
    </source>
</evidence>
<evidence type="ECO:0000269" key="17">
    <source>
    </source>
</evidence>
<evidence type="ECO:0000269" key="18">
    <source>
    </source>
</evidence>
<evidence type="ECO:0000269" key="19">
    <source>
    </source>
</evidence>
<evidence type="ECO:0000269" key="20">
    <source>
    </source>
</evidence>
<evidence type="ECO:0000269" key="21">
    <source>
    </source>
</evidence>
<evidence type="ECO:0000305" key="22"/>
<evidence type="ECO:0000305" key="23">
    <source>
    </source>
</evidence>
<evidence type="ECO:0000305" key="24">
    <source>
    </source>
</evidence>
<evidence type="ECO:0000305" key="25">
    <source>
    </source>
</evidence>
<evidence type="ECO:0000305" key="26">
    <source>
    </source>
</evidence>
<evidence type="ECO:0000305" key="27">
    <source>
    </source>
</evidence>
<evidence type="ECO:0007829" key="28">
    <source>
        <dbReference type="PDB" id="1E8Y"/>
    </source>
</evidence>
<evidence type="ECO:0007829" key="29">
    <source>
        <dbReference type="PDB" id="1HE8"/>
    </source>
</evidence>
<evidence type="ECO:0007829" key="30">
    <source>
        <dbReference type="PDB" id="2A4Z"/>
    </source>
</evidence>
<evidence type="ECO:0007829" key="31">
    <source>
        <dbReference type="PDB" id="3APC"/>
    </source>
</evidence>
<evidence type="ECO:0007829" key="32">
    <source>
        <dbReference type="PDB" id="3L54"/>
    </source>
</evidence>
<evidence type="ECO:0007829" key="33">
    <source>
        <dbReference type="PDB" id="3LJ3"/>
    </source>
</evidence>
<evidence type="ECO:0007829" key="34">
    <source>
        <dbReference type="PDB" id="3ML8"/>
    </source>
</evidence>
<evidence type="ECO:0007829" key="35">
    <source>
        <dbReference type="PDB" id="3PRE"/>
    </source>
</evidence>
<evidence type="ECO:0007829" key="36">
    <source>
        <dbReference type="PDB" id="4ANV"/>
    </source>
</evidence>
<evidence type="ECO:0007829" key="37">
    <source>
        <dbReference type="PDB" id="4ANW"/>
    </source>
</evidence>
<evidence type="ECO:0007829" key="38">
    <source>
        <dbReference type="PDB" id="5G2N"/>
    </source>
</evidence>
<evidence type="ECO:0007829" key="39">
    <source>
        <dbReference type="PDB" id="5G55"/>
    </source>
</evidence>
<evidence type="ECO:0007829" key="40">
    <source>
        <dbReference type="PDB" id="5T23"/>
    </source>
</evidence>
<evidence type="ECO:0007829" key="41">
    <source>
        <dbReference type="PDB" id="6AUD"/>
    </source>
</evidence>
<evidence type="ECO:0007829" key="42">
    <source>
        <dbReference type="PDB" id="6XRL"/>
    </source>
</evidence>
<evidence type="ECO:0007829" key="43">
    <source>
        <dbReference type="PDB" id="6XRM"/>
    </source>
</evidence>
<evidence type="ECO:0007829" key="44">
    <source>
        <dbReference type="PDB" id="7JWE"/>
    </source>
</evidence>
<evidence type="ECO:0007829" key="45">
    <source>
        <dbReference type="PDB" id="7MEZ"/>
    </source>
</evidence>
<evidence type="ECO:0007829" key="46">
    <source>
        <dbReference type="PDB" id="8DP0"/>
    </source>
</evidence>
<gene>
    <name type="primary">PIK3CG</name>
</gene>
<dbReference type="EC" id="2.7.1.137" evidence="8 16"/>
<dbReference type="EC" id="2.7.1.153" evidence="12 16"/>
<dbReference type="EC" id="2.7.1.154" evidence="16"/>
<dbReference type="EC" id="2.7.11.1" evidence="11 15"/>
<dbReference type="EMBL" id="X83368">
    <property type="protein sequence ID" value="CAA58284.1"/>
    <property type="molecule type" value="mRNA"/>
</dbReference>
<dbReference type="EMBL" id="AF327656">
    <property type="protein sequence ID" value="AAG61115.1"/>
    <property type="molecule type" value="mRNA"/>
</dbReference>
<dbReference type="EMBL" id="AC005018">
    <property type="protein sequence ID" value="AAQ96873.1"/>
    <property type="molecule type" value="Genomic_DNA"/>
</dbReference>
<dbReference type="EMBL" id="CH236947">
    <property type="protein sequence ID" value="EAL24396.1"/>
    <property type="molecule type" value="Genomic_DNA"/>
</dbReference>
<dbReference type="EMBL" id="CH471070">
    <property type="protein sequence ID" value="EAW83387.1"/>
    <property type="molecule type" value="Genomic_DNA"/>
</dbReference>
<dbReference type="EMBL" id="BC035683">
    <property type="protein sequence ID" value="AAH35683.1"/>
    <property type="molecule type" value="mRNA"/>
</dbReference>
<dbReference type="CCDS" id="CCDS5739.1"/>
<dbReference type="RefSeq" id="NP_001269355.1">
    <property type="nucleotide sequence ID" value="NM_001282426.2"/>
</dbReference>
<dbReference type="RefSeq" id="NP_001269356.1">
    <property type="nucleotide sequence ID" value="NM_001282427.2"/>
</dbReference>
<dbReference type="RefSeq" id="NP_002640.2">
    <property type="nucleotide sequence ID" value="NM_002649.3"/>
</dbReference>
<dbReference type="RefSeq" id="XP_005250500.1">
    <property type="nucleotide sequence ID" value="XM_005250443.4"/>
</dbReference>
<dbReference type="RefSeq" id="XP_054214385.1">
    <property type="nucleotide sequence ID" value="XM_054358410.1"/>
</dbReference>
<dbReference type="PDB" id="1E8Y">
    <property type="method" value="X-ray"/>
    <property type="resolution" value="2.00 A"/>
    <property type="chains" value="A=144-1102"/>
</dbReference>
<dbReference type="PDB" id="1E8Z">
    <property type="method" value="X-ray"/>
    <property type="resolution" value="2.40 A"/>
    <property type="chains" value="A=144-1102"/>
</dbReference>
<dbReference type="PDB" id="1HE8">
    <property type="method" value="X-ray"/>
    <property type="resolution" value="3.00 A"/>
    <property type="chains" value="A=144-1102"/>
</dbReference>
<dbReference type="PDB" id="2A4Z">
    <property type="method" value="X-ray"/>
    <property type="resolution" value="2.90 A"/>
    <property type="chains" value="A=144-1102"/>
</dbReference>
<dbReference type="PDB" id="2A5U">
    <property type="method" value="X-ray"/>
    <property type="resolution" value="2.70 A"/>
    <property type="chains" value="A=144-1102"/>
</dbReference>
<dbReference type="PDB" id="2CHW">
    <property type="method" value="X-ray"/>
    <property type="resolution" value="2.60 A"/>
    <property type="chains" value="A=144-1102"/>
</dbReference>
<dbReference type="PDB" id="2CHX">
    <property type="method" value="X-ray"/>
    <property type="resolution" value="2.50 A"/>
    <property type="chains" value="A=144-1102"/>
</dbReference>
<dbReference type="PDB" id="2CHZ">
    <property type="method" value="X-ray"/>
    <property type="resolution" value="2.60 A"/>
    <property type="chains" value="A=144-1102"/>
</dbReference>
<dbReference type="PDB" id="2V4L">
    <property type="method" value="X-ray"/>
    <property type="resolution" value="2.50 A"/>
    <property type="chains" value="A=144-1102"/>
</dbReference>
<dbReference type="PDB" id="3APC">
    <property type="method" value="X-ray"/>
    <property type="resolution" value="2.54 A"/>
    <property type="chains" value="A=144-1102"/>
</dbReference>
<dbReference type="PDB" id="3APD">
    <property type="method" value="X-ray"/>
    <property type="resolution" value="2.55 A"/>
    <property type="chains" value="A=144-1102"/>
</dbReference>
<dbReference type="PDB" id="3APF">
    <property type="method" value="X-ray"/>
    <property type="resolution" value="2.82 A"/>
    <property type="chains" value="A=144-1102"/>
</dbReference>
<dbReference type="PDB" id="3CSF">
    <property type="method" value="X-ray"/>
    <property type="resolution" value="2.80 A"/>
    <property type="chains" value="A=144-1102"/>
</dbReference>
<dbReference type="PDB" id="3CST">
    <property type="method" value="X-ray"/>
    <property type="resolution" value="3.20 A"/>
    <property type="chains" value="A=144-1102"/>
</dbReference>
<dbReference type="PDB" id="3DBS">
    <property type="method" value="X-ray"/>
    <property type="resolution" value="2.80 A"/>
    <property type="chains" value="A=144-1102"/>
</dbReference>
<dbReference type="PDB" id="3DPD">
    <property type="method" value="X-ray"/>
    <property type="resolution" value="2.85 A"/>
    <property type="chains" value="A=144-1102"/>
</dbReference>
<dbReference type="PDB" id="3ENE">
    <property type="method" value="X-ray"/>
    <property type="resolution" value="2.40 A"/>
    <property type="chains" value="A=144-1102"/>
</dbReference>
<dbReference type="PDB" id="3IBE">
    <property type="method" value="X-ray"/>
    <property type="resolution" value="2.80 A"/>
    <property type="chains" value="A=144-1102"/>
</dbReference>
<dbReference type="PDB" id="3L08">
    <property type="method" value="X-ray"/>
    <property type="resolution" value="2.70 A"/>
    <property type="chains" value="A=144-1102"/>
</dbReference>
<dbReference type="PDB" id="3L13">
    <property type="method" value="X-ray"/>
    <property type="resolution" value="3.00 A"/>
    <property type="chains" value="A=144-1102"/>
</dbReference>
<dbReference type="PDB" id="3L16">
    <property type="method" value="X-ray"/>
    <property type="resolution" value="2.90 A"/>
    <property type="chains" value="A=144-1102"/>
</dbReference>
<dbReference type="PDB" id="3L17">
    <property type="method" value="X-ray"/>
    <property type="resolution" value="3.00 A"/>
    <property type="chains" value="A=144-1102"/>
</dbReference>
<dbReference type="PDB" id="3L54">
    <property type="method" value="X-ray"/>
    <property type="resolution" value="2.30 A"/>
    <property type="chains" value="A=144-1102"/>
</dbReference>
<dbReference type="PDB" id="3LJ3">
    <property type="method" value="X-ray"/>
    <property type="resolution" value="2.43 A"/>
    <property type="chains" value="A=144-1102"/>
</dbReference>
<dbReference type="PDB" id="3MJW">
    <property type="method" value="X-ray"/>
    <property type="resolution" value="2.87 A"/>
    <property type="chains" value="A=144-1102"/>
</dbReference>
<dbReference type="PDB" id="3ML8">
    <property type="method" value="X-ray"/>
    <property type="resolution" value="2.70 A"/>
    <property type="chains" value="A=144-1102"/>
</dbReference>
<dbReference type="PDB" id="3ML9">
    <property type="method" value="X-ray"/>
    <property type="resolution" value="2.55 A"/>
    <property type="chains" value="A=144-1102"/>
</dbReference>
<dbReference type="PDB" id="3NZS">
    <property type="method" value="X-ray"/>
    <property type="resolution" value="2.75 A"/>
    <property type="chains" value="A=147-1094"/>
</dbReference>
<dbReference type="PDB" id="3NZU">
    <property type="method" value="X-ray"/>
    <property type="resolution" value="2.60 A"/>
    <property type="chains" value="A=147-1094"/>
</dbReference>
<dbReference type="PDB" id="3OAW">
    <property type="method" value="X-ray"/>
    <property type="resolution" value="2.75 A"/>
    <property type="chains" value="A=144-1102"/>
</dbReference>
<dbReference type="PDB" id="3P2B">
    <property type="method" value="X-ray"/>
    <property type="resolution" value="3.20 A"/>
    <property type="chains" value="A=144-1102"/>
</dbReference>
<dbReference type="PDB" id="3PRE">
    <property type="method" value="X-ray"/>
    <property type="resolution" value="2.91 A"/>
    <property type="chains" value="A=144-1102"/>
</dbReference>
<dbReference type="PDB" id="3PRZ">
    <property type="method" value="X-ray"/>
    <property type="resolution" value="2.60 A"/>
    <property type="chains" value="A=144-1102"/>
</dbReference>
<dbReference type="PDB" id="3PS6">
    <property type="method" value="X-ray"/>
    <property type="resolution" value="2.60 A"/>
    <property type="chains" value="A=144-1102"/>
</dbReference>
<dbReference type="PDB" id="3QAQ">
    <property type="method" value="X-ray"/>
    <property type="resolution" value="2.90 A"/>
    <property type="chains" value="A=144-1102"/>
</dbReference>
<dbReference type="PDB" id="3QAR">
    <property type="method" value="X-ray"/>
    <property type="resolution" value="2.65 A"/>
    <property type="chains" value="A=144-1102"/>
</dbReference>
<dbReference type="PDB" id="3QJZ">
    <property type="method" value="X-ray"/>
    <property type="resolution" value="2.90 A"/>
    <property type="chains" value="A=144-1102"/>
</dbReference>
<dbReference type="PDB" id="3QK0">
    <property type="method" value="X-ray"/>
    <property type="resolution" value="2.85 A"/>
    <property type="chains" value="A=144-1102"/>
</dbReference>
<dbReference type="PDB" id="3R7Q">
    <property type="method" value="X-ray"/>
    <property type="resolution" value="2.50 A"/>
    <property type="chains" value="A=144-1102"/>
</dbReference>
<dbReference type="PDB" id="3R7R">
    <property type="method" value="X-ray"/>
    <property type="resolution" value="2.90 A"/>
    <property type="chains" value="A=144-1102"/>
</dbReference>
<dbReference type="PDB" id="3S2A">
    <property type="method" value="X-ray"/>
    <property type="resolution" value="2.55 A"/>
    <property type="chains" value="A=144-1102"/>
</dbReference>
<dbReference type="PDB" id="3SD5">
    <property type="method" value="X-ray"/>
    <property type="resolution" value="3.20 A"/>
    <property type="chains" value="A=144-1102"/>
</dbReference>
<dbReference type="PDB" id="3T8M">
    <property type="method" value="X-ray"/>
    <property type="resolution" value="2.50 A"/>
    <property type="chains" value="A=144-1102"/>
</dbReference>
<dbReference type="PDB" id="3TJP">
    <property type="method" value="X-ray"/>
    <property type="resolution" value="2.70 A"/>
    <property type="chains" value="A=144-1102"/>
</dbReference>
<dbReference type="PDB" id="3TL5">
    <property type="method" value="X-ray"/>
    <property type="resolution" value="2.79 A"/>
    <property type="chains" value="A=144-1102"/>
</dbReference>
<dbReference type="PDB" id="3ZVV">
    <property type="method" value="X-ray"/>
    <property type="resolution" value="2.50 A"/>
    <property type="chains" value="A=144-1102"/>
</dbReference>
<dbReference type="PDB" id="3ZW3">
    <property type="method" value="X-ray"/>
    <property type="resolution" value="2.80 A"/>
    <property type="chains" value="A=144-1102"/>
</dbReference>
<dbReference type="PDB" id="4ANU">
    <property type="method" value="X-ray"/>
    <property type="resolution" value="2.81 A"/>
    <property type="chains" value="A=144-1102"/>
</dbReference>
<dbReference type="PDB" id="4ANV">
    <property type="method" value="X-ray"/>
    <property type="resolution" value="2.13 A"/>
    <property type="chains" value="A=144-1102"/>
</dbReference>
<dbReference type="PDB" id="4ANW">
    <property type="method" value="X-ray"/>
    <property type="resolution" value="2.31 A"/>
    <property type="chains" value="A=144-1102"/>
</dbReference>
<dbReference type="PDB" id="4ANX">
    <property type="method" value="X-ray"/>
    <property type="resolution" value="2.73 A"/>
    <property type="chains" value="A=144-1102"/>
</dbReference>
<dbReference type="PDB" id="4AOF">
    <property type="method" value="X-ray"/>
    <property type="resolution" value="3.30 A"/>
    <property type="chains" value="A=144-1102"/>
</dbReference>
<dbReference type="PDB" id="4DK5">
    <property type="method" value="X-ray"/>
    <property type="resolution" value="2.95 A"/>
    <property type="chains" value="A=144-1102"/>
</dbReference>
<dbReference type="PDB" id="4EZJ">
    <property type="method" value="X-ray"/>
    <property type="resolution" value="2.67 A"/>
    <property type="chains" value="A=144-1102"/>
</dbReference>
<dbReference type="PDB" id="4EZK">
    <property type="method" value="X-ray"/>
    <property type="resolution" value="2.80 A"/>
    <property type="chains" value="A=144-1102"/>
</dbReference>
<dbReference type="PDB" id="4EZL">
    <property type="method" value="X-ray"/>
    <property type="resolution" value="2.94 A"/>
    <property type="chains" value="A=144-1102"/>
</dbReference>
<dbReference type="PDB" id="4F1S">
    <property type="method" value="X-ray"/>
    <property type="resolution" value="3.00 A"/>
    <property type="chains" value="A=144-1102"/>
</dbReference>
<dbReference type="PDB" id="4FA6">
    <property type="method" value="X-ray"/>
    <property type="resolution" value="2.70 A"/>
    <property type="chains" value="A=144-1102"/>
</dbReference>
<dbReference type="PDB" id="4FAD">
    <property type="method" value="X-ray"/>
    <property type="resolution" value="2.70 A"/>
    <property type="chains" value="A=144-1102"/>
</dbReference>
<dbReference type="PDB" id="4FHJ">
    <property type="method" value="X-ray"/>
    <property type="resolution" value="2.60 A"/>
    <property type="chains" value="A=144-1102"/>
</dbReference>
<dbReference type="PDB" id="4FHK">
    <property type="method" value="X-ray"/>
    <property type="resolution" value="3.00 A"/>
    <property type="chains" value="A=144-1102"/>
</dbReference>
<dbReference type="PDB" id="4FJY">
    <property type="method" value="X-ray"/>
    <property type="resolution" value="2.90 A"/>
    <property type="chains" value="A=144-1102"/>
</dbReference>
<dbReference type="PDB" id="4FJZ">
    <property type="method" value="X-ray"/>
    <property type="resolution" value="3.00 A"/>
    <property type="chains" value="A=144-1102"/>
</dbReference>
<dbReference type="PDB" id="4FLH">
    <property type="method" value="X-ray"/>
    <property type="resolution" value="2.60 A"/>
    <property type="chains" value="A=144-1102"/>
</dbReference>
<dbReference type="PDB" id="4FUL">
    <property type="method" value="X-ray"/>
    <property type="resolution" value="2.47 A"/>
    <property type="chains" value="A=144-1102"/>
</dbReference>
<dbReference type="PDB" id="4G11">
    <property type="method" value="X-ray"/>
    <property type="resolution" value="3.40 A"/>
    <property type="chains" value="A=144-1102"/>
</dbReference>
<dbReference type="PDB" id="4GB9">
    <property type="method" value="X-ray"/>
    <property type="resolution" value="2.44 A"/>
    <property type="chains" value="A=144-1102"/>
</dbReference>
<dbReference type="PDB" id="4HLE">
    <property type="method" value="X-ray"/>
    <property type="resolution" value="2.78 A"/>
    <property type="chains" value="A=144-1102"/>
</dbReference>
<dbReference type="PDB" id="4HVB">
    <property type="method" value="X-ray"/>
    <property type="resolution" value="2.35 A"/>
    <property type="chains" value="A=144-1102"/>
</dbReference>
<dbReference type="PDB" id="4J6I">
    <property type="method" value="X-ray"/>
    <property type="resolution" value="2.90 A"/>
    <property type="chains" value="A=144-1102"/>
</dbReference>
<dbReference type="PDB" id="4KZ0">
    <property type="method" value="X-ray"/>
    <property type="resolution" value="2.87 A"/>
    <property type="chains" value="A=144-1102"/>
</dbReference>
<dbReference type="PDB" id="4KZC">
    <property type="method" value="X-ray"/>
    <property type="resolution" value="3.25 A"/>
    <property type="chains" value="A=144-1102"/>
</dbReference>
<dbReference type="PDB" id="4PS3">
    <property type="method" value="X-ray"/>
    <property type="resolution" value="2.90 A"/>
    <property type="chains" value="A=144-1102"/>
</dbReference>
<dbReference type="PDB" id="4PS7">
    <property type="method" value="X-ray"/>
    <property type="resolution" value="2.69 A"/>
    <property type="chains" value="A=144-1102"/>
</dbReference>
<dbReference type="PDB" id="4PS8">
    <property type="method" value="X-ray"/>
    <property type="resolution" value="2.99 A"/>
    <property type="chains" value="A=144-1102"/>
</dbReference>
<dbReference type="PDB" id="4URK">
    <property type="method" value="X-ray"/>
    <property type="resolution" value="2.90 A"/>
    <property type="chains" value="A=144-1102"/>
</dbReference>
<dbReference type="PDB" id="4WWN">
    <property type="method" value="X-ray"/>
    <property type="resolution" value="2.70 A"/>
    <property type="chains" value="A=144-1102"/>
</dbReference>
<dbReference type="PDB" id="4WWO">
    <property type="method" value="X-ray"/>
    <property type="resolution" value="2.30 A"/>
    <property type="chains" value="A=144-1102"/>
</dbReference>
<dbReference type="PDB" id="4WWP">
    <property type="method" value="X-ray"/>
    <property type="resolution" value="2.40 A"/>
    <property type="chains" value="A=144-1102"/>
</dbReference>
<dbReference type="PDB" id="4XX5">
    <property type="method" value="X-ray"/>
    <property type="resolution" value="2.76 A"/>
    <property type="chains" value="A=144-1102"/>
</dbReference>
<dbReference type="PDB" id="4XZ4">
    <property type="method" value="X-ray"/>
    <property type="resolution" value="2.60 A"/>
    <property type="chains" value="A=144-1102"/>
</dbReference>
<dbReference type="PDB" id="5EDS">
    <property type="method" value="X-ray"/>
    <property type="resolution" value="2.80 A"/>
    <property type="chains" value="A=144-1102"/>
</dbReference>
<dbReference type="PDB" id="5G2N">
    <property type="method" value="X-ray"/>
    <property type="resolution" value="2.68 A"/>
    <property type="chains" value="A=144-1102"/>
</dbReference>
<dbReference type="PDB" id="5G55">
    <property type="method" value="X-ray"/>
    <property type="resolution" value="2.45 A"/>
    <property type="chains" value="A=144-1102"/>
</dbReference>
<dbReference type="PDB" id="5JHA">
    <property type="method" value="X-ray"/>
    <property type="resolution" value="2.51 A"/>
    <property type="chains" value="A=144-1102"/>
</dbReference>
<dbReference type="PDB" id="5JHB">
    <property type="method" value="X-ray"/>
    <property type="resolution" value="2.48 A"/>
    <property type="chains" value="A=144-1102"/>
</dbReference>
<dbReference type="PDB" id="5KAE">
    <property type="method" value="X-ray"/>
    <property type="resolution" value="2.65 A"/>
    <property type="chains" value="A=144-1102"/>
</dbReference>
<dbReference type="PDB" id="5OQ4">
    <property type="method" value="X-ray"/>
    <property type="resolution" value="2.70 A"/>
    <property type="chains" value="A=144-1102"/>
</dbReference>
<dbReference type="PDB" id="5T23">
    <property type="method" value="X-ray"/>
    <property type="resolution" value="2.78 A"/>
    <property type="chains" value="A=144-1102"/>
</dbReference>
<dbReference type="PDB" id="6AUD">
    <property type="method" value="X-ray"/>
    <property type="resolution" value="2.02 A"/>
    <property type="chains" value="A=144-1102"/>
</dbReference>
<dbReference type="PDB" id="6C1S">
    <property type="method" value="X-ray"/>
    <property type="resolution" value="2.31 A"/>
    <property type="chains" value="A=144-1102"/>
</dbReference>
<dbReference type="PDB" id="6FH5">
    <property type="method" value="X-ray"/>
    <property type="resolution" value="2.84 A"/>
    <property type="chains" value="A=144-1102"/>
</dbReference>
<dbReference type="PDB" id="6GQ7">
    <property type="method" value="X-ray"/>
    <property type="resolution" value="2.84 A"/>
    <property type="chains" value="A=144-1102"/>
</dbReference>
<dbReference type="PDB" id="6T3B">
    <property type="method" value="X-ray"/>
    <property type="resolution" value="3.01 A"/>
    <property type="chains" value="A=144-1102"/>
</dbReference>
<dbReference type="PDB" id="6T3C">
    <property type="method" value="X-ray"/>
    <property type="resolution" value="2.62 A"/>
    <property type="chains" value="A=144-1102"/>
</dbReference>
<dbReference type="PDB" id="6XRL">
    <property type="method" value="X-ray"/>
    <property type="resolution" value="2.99 A"/>
    <property type="chains" value="A=144-1091"/>
</dbReference>
<dbReference type="PDB" id="6XRM">
    <property type="method" value="X-ray"/>
    <property type="resolution" value="2.88 A"/>
    <property type="chains" value="A=144-1091"/>
</dbReference>
<dbReference type="PDB" id="6XRN">
    <property type="method" value="X-ray"/>
    <property type="resolution" value="2.96 A"/>
    <property type="chains" value="A=144-1091"/>
</dbReference>
<dbReference type="PDB" id="7JWE">
    <property type="method" value="X-ray"/>
    <property type="resolution" value="2.55 A"/>
    <property type="chains" value="A=144-1102"/>
</dbReference>
<dbReference type="PDB" id="7JWZ">
    <property type="method" value="X-ray"/>
    <property type="resolution" value="2.65 A"/>
    <property type="chains" value="A=144-1102"/>
</dbReference>
<dbReference type="PDB" id="7JX0">
    <property type="method" value="X-ray"/>
    <property type="resolution" value="3.15 A"/>
    <property type="chains" value="A=144-1102"/>
</dbReference>
<dbReference type="PDB" id="7KKE">
    <property type="method" value="X-ray"/>
    <property type="resolution" value="2.81 A"/>
    <property type="chains" value="A=144-1102"/>
</dbReference>
<dbReference type="PDB" id="7MEZ">
    <property type="method" value="EM"/>
    <property type="resolution" value="2.89 A"/>
    <property type="chains" value="A=1-1102"/>
</dbReference>
<dbReference type="PDB" id="7Z61">
    <property type="method" value="X-ray"/>
    <property type="resolution" value="2.74 A"/>
    <property type="chains" value="A=144-1102"/>
</dbReference>
<dbReference type="PDB" id="8DP0">
    <property type="method" value="EM"/>
    <property type="resolution" value="2.96 A"/>
    <property type="chains" value="A=1-1102"/>
</dbReference>
<dbReference type="PDB" id="8SC8">
    <property type="method" value="X-ray"/>
    <property type="resolution" value="2.69 A"/>
    <property type="chains" value="A=144-1102"/>
</dbReference>
<dbReference type="PDB" id="9GG9">
    <property type="method" value="X-ray"/>
    <property type="resolution" value="3.00 A"/>
    <property type="chains" value="A=144-1102"/>
</dbReference>
<dbReference type="PDBsum" id="1E8Y"/>
<dbReference type="PDBsum" id="1E8Z"/>
<dbReference type="PDBsum" id="1HE8"/>
<dbReference type="PDBsum" id="2A4Z"/>
<dbReference type="PDBsum" id="2A5U"/>
<dbReference type="PDBsum" id="2CHW"/>
<dbReference type="PDBsum" id="2CHX"/>
<dbReference type="PDBsum" id="2CHZ"/>
<dbReference type="PDBsum" id="2V4L"/>
<dbReference type="PDBsum" id="3APC"/>
<dbReference type="PDBsum" id="3APD"/>
<dbReference type="PDBsum" id="3APF"/>
<dbReference type="PDBsum" id="3CSF"/>
<dbReference type="PDBsum" id="3CST"/>
<dbReference type="PDBsum" id="3DBS"/>
<dbReference type="PDBsum" id="3DPD"/>
<dbReference type="PDBsum" id="3ENE"/>
<dbReference type="PDBsum" id="3IBE"/>
<dbReference type="PDBsum" id="3L08"/>
<dbReference type="PDBsum" id="3L13"/>
<dbReference type="PDBsum" id="3L16"/>
<dbReference type="PDBsum" id="3L17"/>
<dbReference type="PDBsum" id="3L54"/>
<dbReference type="PDBsum" id="3LJ3"/>
<dbReference type="PDBsum" id="3MJW"/>
<dbReference type="PDBsum" id="3ML8"/>
<dbReference type="PDBsum" id="3ML9"/>
<dbReference type="PDBsum" id="3NZS"/>
<dbReference type="PDBsum" id="3NZU"/>
<dbReference type="PDBsum" id="3OAW"/>
<dbReference type="PDBsum" id="3P2B"/>
<dbReference type="PDBsum" id="3PRE"/>
<dbReference type="PDBsum" id="3PRZ"/>
<dbReference type="PDBsum" id="3PS6"/>
<dbReference type="PDBsum" id="3QAQ"/>
<dbReference type="PDBsum" id="3QAR"/>
<dbReference type="PDBsum" id="3QJZ"/>
<dbReference type="PDBsum" id="3QK0"/>
<dbReference type="PDBsum" id="3R7Q"/>
<dbReference type="PDBsum" id="3R7R"/>
<dbReference type="PDBsum" id="3S2A"/>
<dbReference type="PDBsum" id="3SD5"/>
<dbReference type="PDBsum" id="3T8M"/>
<dbReference type="PDBsum" id="3TJP"/>
<dbReference type="PDBsum" id="3TL5"/>
<dbReference type="PDBsum" id="3ZVV"/>
<dbReference type="PDBsum" id="3ZW3"/>
<dbReference type="PDBsum" id="4ANU"/>
<dbReference type="PDBsum" id="4ANV"/>
<dbReference type="PDBsum" id="4ANW"/>
<dbReference type="PDBsum" id="4ANX"/>
<dbReference type="PDBsum" id="4AOF"/>
<dbReference type="PDBsum" id="4DK5"/>
<dbReference type="PDBsum" id="4EZJ"/>
<dbReference type="PDBsum" id="4EZK"/>
<dbReference type="PDBsum" id="4EZL"/>
<dbReference type="PDBsum" id="4F1S"/>
<dbReference type="PDBsum" id="4FA6"/>
<dbReference type="PDBsum" id="4FAD"/>
<dbReference type="PDBsum" id="4FHJ"/>
<dbReference type="PDBsum" id="4FHK"/>
<dbReference type="PDBsum" id="4FJY"/>
<dbReference type="PDBsum" id="4FJZ"/>
<dbReference type="PDBsum" id="4FLH"/>
<dbReference type="PDBsum" id="4FUL"/>
<dbReference type="PDBsum" id="4G11"/>
<dbReference type="PDBsum" id="4GB9"/>
<dbReference type="PDBsum" id="4HLE"/>
<dbReference type="PDBsum" id="4HVB"/>
<dbReference type="PDBsum" id="4J6I"/>
<dbReference type="PDBsum" id="4KZ0"/>
<dbReference type="PDBsum" id="4KZC"/>
<dbReference type="PDBsum" id="4PS3"/>
<dbReference type="PDBsum" id="4PS7"/>
<dbReference type="PDBsum" id="4PS8"/>
<dbReference type="PDBsum" id="4URK"/>
<dbReference type="PDBsum" id="4WWN"/>
<dbReference type="PDBsum" id="4WWO"/>
<dbReference type="PDBsum" id="4WWP"/>
<dbReference type="PDBsum" id="4XX5"/>
<dbReference type="PDBsum" id="4XZ4"/>
<dbReference type="PDBsum" id="5EDS"/>
<dbReference type="PDBsum" id="5G2N"/>
<dbReference type="PDBsum" id="5G55"/>
<dbReference type="PDBsum" id="5JHA"/>
<dbReference type="PDBsum" id="5JHB"/>
<dbReference type="PDBsum" id="5KAE"/>
<dbReference type="PDBsum" id="5OQ4"/>
<dbReference type="PDBsum" id="5T23"/>
<dbReference type="PDBsum" id="6AUD"/>
<dbReference type="PDBsum" id="6C1S"/>
<dbReference type="PDBsum" id="6FH5"/>
<dbReference type="PDBsum" id="6GQ7"/>
<dbReference type="PDBsum" id="6T3B"/>
<dbReference type="PDBsum" id="6T3C"/>
<dbReference type="PDBsum" id="6XRL"/>
<dbReference type="PDBsum" id="6XRM"/>
<dbReference type="PDBsum" id="6XRN"/>
<dbReference type="PDBsum" id="7JWE"/>
<dbReference type="PDBsum" id="7JWZ"/>
<dbReference type="PDBsum" id="7JX0"/>
<dbReference type="PDBsum" id="7KKE"/>
<dbReference type="PDBsum" id="7MEZ"/>
<dbReference type="PDBsum" id="7Z61"/>
<dbReference type="PDBsum" id="8DP0"/>
<dbReference type="PDBsum" id="8SC8"/>
<dbReference type="PDBsum" id="9GG9"/>
<dbReference type="EMDB" id="EMD-23808"/>
<dbReference type="EMDB" id="EMD-27627"/>
<dbReference type="SMR" id="P48736"/>
<dbReference type="BioGRID" id="111312">
    <property type="interactions" value="46"/>
</dbReference>
<dbReference type="ComplexPortal" id="CPX-5986">
    <property type="entry name" value="Phosphatidylinositol 3-kinase complex class IB, p110gamma/p101"/>
</dbReference>
<dbReference type="ComplexPortal" id="CPX-5987">
    <property type="entry name" value="Phosphatidylinositol 3-kinase complex class IB, p110gamma/p87"/>
</dbReference>
<dbReference type="CORUM" id="P48736"/>
<dbReference type="DIP" id="DIP-37781N"/>
<dbReference type="FunCoup" id="P48736">
    <property type="interactions" value="984"/>
</dbReference>
<dbReference type="IntAct" id="P48736">
    <property type="interactions" value="20"/>
</dbReference>
<dbReference type="MINT" id="P48736"/>
<dbReference type="STRING" id="9606.ENSP00000419260"/>
<dbReference type="BindingDB" id="P48736"/>
<dbReference type="ChEMBL" id="CHEMBL3267"/>
<dbReference type="DrugBank" id="DB07503">
    <property type="generic name" value="(5E)-5-[(2,2-DIFLUORO-1,3-BENZODIOXOL-5-YL)METHYLENE]-1,3-THIAZOLIDINE-2,4-DIONE"/>
</dbReference>
<dbReference type="DrugBank" id="DB08300">
    <property type="generic name" value="1-methyl-3-naphthalen-2-yl-1H-pyrazolo[3,4-d]pyrimidin-4-amine"/>
</dbReference>
<dbReference type="DrugBank" id="DB06831">
    <property type="generic name" value="2-((9H-PURIN-6-YLTHIO)METHYL)-5-CHLORO-3-(2-METHOXYPHENYL)QUINAZOLIN-4(3H)-ONE"/>
</dbReference>
<dbReference type="DrugBank" id="DB07335">
    <property type="generic name" value="3-[4-AMINO-1-(1-METHYLETHYL)-1H-PYRAZOLO[3,4-D]PYRIMIDIN-3-YL]PHENOL"/>
</dbReference>
<dbReference type="DrugBank" id="DB07073">
    <property type="generic name" value="5,5-dimethyl-2-morpholin-4-yl-5,6-dihydro-1,3-benzothiazol-7(4H)-one"/>
</dbReference>
<dbReference type="DrugBank" id="DB04769">
    <property type="generic name" value="5-QUINOXALIN-6-YLMETHYLENE-THIAZOLIDINE-2,4-DIONE"/>
</dbReference>
<dbReference type="DrugBank" id="DB12180">
    <property type="generic name" value="Apitolisib"/>
</dbReference>
<dbReference type="DrugBank" id="DB15029">
    <property type="generic name" value="AZD-8186"/>
</dbReference>
<dbReference type="DrugBank" id="DB14846">
    <property type="generic name" value="Bimiralisib"/>
</dbReference>
<dbReference type="DrugBank" id="DB11666">
    <property type="generic name" value="Buparlisib"/>
</dbReference>
<dbReference type="DrugBank" id="DB13051">
    <property type="generic name" value="CH-5132799"/>
</dbReference>
<dbReference type="DrugBank" id="DB12483">
    <property type="generic name" value="Copanlisib"/>
</dbReference>
<dbReference type="DrugBank" id="DB11651">
    <property type="generic name" value="Dactolisib"/>
</dbReference>
<dbReference type="DrugBank" id="DB11952">
    <property type="generic name" value="Duvelisib"/>
</dbReference>
<dbReference type="DrugBank" id="DB06486">
    <property type="generic name" value="Enzastaurin"/>
</dbReference>
<dbReference type="DrugBank" id="DB11891">
    <property type="generic name" value="Fimepinostat"/>
</dbReference>
<dbReference type="DrugBank" id="DB12010">
    <property type="generic name" value="Fostamatinib"/>
</dbReference>
<dbReference type="DrugBank" id="DB11896">
    <property type="generic name" value="Gedatolisib"/>
</dbReference>
<dbReference type="DrugBank" id="DB11962">
    <property type="generic name" value="GSK-1059615"/>
</dbReference>
<dbReference type="DrugBank" id="DB15275">
    <property type="generic name" value="Inavolisib"/>
</dbReference>
<dbReference type="DrugBank" id="DB16296">
    <property type="generic name" value="IPI-549"/>
</dbReference>
<dbReference type="DrugBank" id="DB02656">
    <property type="generic name" value="LY-294002"/>
</dbReference>
<dbReference type="DrugBank" id="DB02375">
    <property type="generic name" value="Myricetin"/>
</dbReference>
<dbReference type="DrugBank" id="DB06836">
    <property type="generic name" value="N-(5-{4-Chloro-3-[(2-hydroxyethyl)sulfamoyl]phenyl}-4-methyl-1,3-thiazol-2-yl)acetamide"/>
</dbReference>
<dbReference type="DrugBank" id="DB12703">
    <property type="generic name" value="Omipalisib"/>
</dbReference>
<dbReference type="DrugBank" id="DB15186">
    <property type="generic name" value="Paxalisib"/>
</dbReference>
<dbReference type="DrugBank" id="DB06641">
    <property type="generic name" value="Perifosine"/>
</dbReference>
<dbReference type="DrugBank" id="DB11974">
    <property type="generic name" value="PF-04691502"/>
</dbReference>
<dbReference type="DrugBank" id="DB17046">
    <property type="generic name" value="PI-103"/>
</dbReference>
<dbReference type="DrugBank" id="DB11663">
    <property type="generic name" value="Pictilisib"/>
</dbReference>
<dbReference type="DrugBank" id="DB17047">
    <property type="generic name" value="PIK-75"/>
</dbReference>
<dbReference type="DrugBank" id="DB08052">
    <property type="generic name" value="PP-121"/>
</dbReference>
<dbReference type="DrugBank" id="DB04216">
    <property type="generic name" value="Quercetin"/>
</dbReference>
<dbReference type="DrugBank" id="DB12146">
    <property type="generic name" value="Rigosertib"/>
</dbReference>
<dbReference type="DrugBank" id="DB12601">
    <property type="generic name" value="Sonolisib"/>
</dbReference>
<dbReference type="DrugBank" id="DB02010">
    <property type="generic name" value="Staurosporine"/>
</dbReference>
<dbReference type="DrugBank" id="DB12108">
    <property type="generic name" value="Taselisib"/>
</dbReference>
<dbReference type="DrugBank" id="DB05552">
    <property type="generic name" value="TG100-115"/>
</dbReference>
<dbReference type="DrugBank" id="DB12400">
    <property type="generic name" value="Voxtalisib"/>
</dbReference>
<dbReference type="DrugBank" id="DB12986">
    <property type="generic name" value="VS-5584"/>
</dbReference>
<dbReference type="DrugBank" id="DB08059">
    <property type="generic name" value="Wortmannin"/>
</dbReference>
<dbReference type="DrugBank" id="DB05241">
    <property type="generic name" value="XL765"/>
</dbReference>
<dbReference type="DrugBank" id="DB12904">
    <property type="generic name" value="ZSTK-474"/>
</dbReference>
<dbReference type="DrugCentral" id="P48736"/>
<dbReference type="GuidetoPHARMACOLOGY" id="2156"/>
<dbReference type="SwissLipids" id="SLP:000000909"/>
<dbReference type="GlyGen" id="P48736">
    <property type="glycosylation" value="2 sites, 1 O-linked glycan (2 sites)"/>
</dbReference>
<dbReference type="iPTMnet" id="P48736"/>
<dbReference type="PhosphoSitePlus" id="P48736"/>
<dbReference type="BioMuta" id="PIK3CG"/>
<dbReference type="DMDM" id="92090623"/>
<dbReference type="CPTAC" id="CPTAC-3150"/>
<dbReference type="CPTAC" id="CPTAC-3151"/>
<dbReference type="CPTAC" id="CPTAC-3152"/>
<dbReference type="jPOST" id="P48736"/>
<dbReference type="MassIVE" id="P48736"/>
<dbReference type="PaxDb" id="9606-ENSP00000352121"/>
<dbReference type="PeptideAtlas" id="P48736"/>
<dbReference type="ProteomicsDB" id="55933"/>
<dbReference type="Pumba" id="P48736"/>
<dbReference type="Antibodypedia" id="4141">
    <property type="antibodies" value="1004 antibodies from 40 providers"/>
</dbReference>
<dbReference type="DNASU" id="5294"/>
<dbReference type="Ensembl" id="ENST00000359195.3">
    <property type="protein sequence ID" value="ENSP00000352121.3"/>
    <property type="gene ID" value="ENSG00000105851.11"/>
</dbReference>
<dbReference type="Ensembl" id="ENST00000440650.6">
    <property type="protein sequence ID" value="ENSP00000392258.2"/>
    <property type="gene ID" value="ENSG00000105851.11"/>
</dbReference>
<dbReference type="Ensembl" id="ENST00000496166.6">
    <property type="protein sequence ID" value="ENSP00000419260.1"/>
    <property type="gene ID" value="ENSG00000105851.11"/>
</dbReference>
<dbReference type="GeneID" id="5294"/>
<dbReference type="KEGG" id="hsa:5294"/>
<dbReference type="MANE-Select" id="ENST00000496166.6">
    <property type="protein sequence ID" value="ENSP00000419260.1"/>
    <property type="RefSeq nucleotide sequence ID" value="NM_001282426.2"/>
    <property type="RefSeq protein sequence ID" value="NP_001269355.1"/>
</dbReference>
<dbReference type="UCSC" id="uc003vdu.5">
    <property type="organism name" value="human"/>
</dbReference>
<dbReference type="AGR" id="HGNC:8978"/>
<dbReference type="CTD" id="5294"/>
<dbReference type="DisGeNET" id="5294"/>
<dbReference type="GeneCards" id="PIK3CG"/>
<dbReference type="HGNC" id="HGNC:8978">
    <property type="gene designation" value="PIK3CG"/>
</dbReference>
<dbReference type="HPA" id="ENSG00000105851">
    <property type="expression patterns" value="Group enriched (bone marrow, lymphoid tissue)"/>
</dbReference>
<dbReference type="MalaCards" id="PIK3CG"/>
<dbReference type="MIM" id="601232">
    <property type="type" value="gene"/>
</dbReference>
<dbReference type="MIM" id="619802">
    <property type="type" value="phenotype"/>
</dbReference>
<dbReference type="neXtProt" id="NX_P48736"/>
<dbReference type="OpenTargets" id="ENSG00000105851"/>
<dbReference type="PharmGKB" id="PA33311"/>
<dbReference type="VEuPathDB" id="HostDB:ENSG00000105851"/>
<dbReference type="eggNOG" id="KOG0904">
    <property type="taxonomic scope" value="Eukaryota"/>
</dbReference>
<dbReference type="GeneTree" id="ENSGT00940000156858"/>
<dbReference type="HOGENOM" id="CLU_002191_1_0_1"/>
<dbReference type="InParanoid" id="P48736"/>
<dbReference type="OMA" id="WDCDRRF"/>
<dbReference type="OrthoDB" id="67688at2759"/>
<dbReference type="PAN-GO" id="P48736">
    <property type="GO annotations" value="9 GO annotations based on evolutionary models"/>
</dbReference>
<dbReference type="PhylomeDB" id="P48736"/>
<dbReference type="TreeFam" id="TF102031"/>
<dbReference type="BioCyc" id="MetaCyc:HS02818-MONOMER"/>
<dbReference type="BRENDA" id="2.7.1.137">
    <property type="organism ID" value="2681"/>
</dbReference>
<dbReference type="BRENDA" id="2.7.1.153">
    <property type="organism ID" value="2681"/>
</dbReference>
<dbReference type="BRENDA" id="2.7.11.1">
    <property type="organism ID" value="2681"/>
</dbReference>
<dbReference type="PathwayCommons" id="P48736"/>
<dbReference type="Reactome" id="R-HSA-114604">
    <property type="pathway name" value="GPVI-mediated activation cascade"/>
</dbReference>
<dbReference type="Reactome" id="R-HSA-1257604">
    <property type="pathway name" value="PIP3 activates AKT signaling"/>
</dbReference>
<dbReference type="Reactome" id="R-HSA-1660499">
    <property type="pathway name" value="Synthesis of PIPs at the plasma membrane"/>
</dbReference>
<dbReference type="Reactome" id="R-HSA-2219530">
    <property type="pathway name" value="Constitutive Signaling by Aberrant PI3K in Cancer"/>
</dbReference>
<dbReference type="Reactome" id="R-HSA-389357">
    <property type="pathway name" value="CD28 dependent PI3K/Akt signaling"/>
</dbReference>
<dbReference type="Reactome" id="R-HSA-392451">
    <property type="pathway name" value="G beta:gamma signalling through PI3Kgamma"/>
</dbReference>
<dbReference type="Reactome" id="R-HSA-6811558">
    <property type="pathway name" value="PI5P, PP2A and IER3 Regulate PI3K/AKT Signaling"/>
</dbReference>
<dbReference type="Reactome" id="R-HSA-9027276">
    <property type="pathway name" value="Erythropoietin activates Phosphoinositide-3-kinase (PI3K)"/>
</dbReference>
<dbReference type="Reactome" id="R-HSA-9927354">
    <property type="pathway name" value="Co-stimulation by ICOS"/>
</dbReference>
<dbReference type="SignaLink" id="P48736"/>
<dbReference type="SIGNOR" id="P48736"/>
<dbReference type="UniPathway" id="UPA00220"/>
<dbReference type="BioGRID-ORCS" id="5294">
    <property type="hits" value="21 hits in 1160 CRISPR screens"/>
</dbReference>
<dbReference type="ChiTaRS" id="PIK3CG">
    <property type="organism name" value="human"/>
</dbReference>
<dbReference type="EvolutionaryTrace" id="P48736"/>
<dbReference type="GeneWiki" id="PIK3CG"/>
<dbReference type="GenomeRNAi" id="5294"/>
<dbReference type="Pharos" id="P48736">
    <property type="development level" value="Tclin"/>
</dbReference>
<dbReference type="PRO" id="PR:P48736"/>
<dbReference type="Proteomes" id="UP000005640">
    <property type="component" value="Chromosome 7"/>
</dbReference>
<dbReference type="RNAct" id="P48736">
    <property type="molecule type" value="protein"/>
</dbReference>
<dbReference type="Bgee" id="ENSG00000105851">
    <property type="expression patterns" value="Expressed in bone marrow and 131 other cell types or tissues"/>
</dbReference>
<dbReference type="ExpressionAtlas" id="P48736">
    <property type="expression patterns" value="baseline and differential"/>
</dbReference>
<dbReference type="GO" id="GO:0005737">
    <property type="term" value="C:cytoplasm"/>
    <property type="evidence" value="ECO:0000314"/>
    <property type="project" value="UniProtKB"/>
</dbReference>
<dbReference type="GO" id="GO:0005829">
    <property type="term" value="C:cytosol"/>
    <property type="evidence" value="ECO:0000314"/>
    <property type="project" value="HPA"/>
</dbReference>
<dbReference type="GO" id="GO:0016020">
    <property type="term" value="C:membrane"/>
    <property type="evidence" value="ECO:0000314"/>
    <property type="project" value="UniProtKB"/>
</dbReference>
<dbReference type="GO" id="GO:0005943">
    <property type="term" value="C:phosphatidylinositol 3-kinase complex, class IA"/>
    <property type="evidence" value="ECO:0000269"/>
    <property type="project" value="ComplexPortal"/>
</dbReference>
<dbReference type="GO" id="GO:0005944">
    <property type="term" value="C:phosphatidylinositol 3-kinase complex, class IB"/>
    <property type="evidence" value="ECO:0000314"/>
    <property type="project" value="UniProtKB"/>
</dbReference>
<dbReference type="GO" id="GO:0005886">
    <property type="term" value="C:plasma membrane"/>
    <property type="evidence" value="ECO:0000314"/>
    <property type="project" value="HPA"/>
</dbReference>
<dbReference type="GO" id="GO:0016303">
    <property type="term" value="F:1-phosphatidylinositol-3-kinase activity"/>
    <property type="evidence" value="ECO:0000314"/>
    <property type="project" value="UniProtKB"/>
</dbReference>
<dbReference type="GO" id="GO:0046934">
    <property type="term" value="F:1-phosphatidylinositol-4,5-bisphosphate 3-kinase activity"/>
    <property type="evidence" value="ECO:0000314"/>
    <property type="project" value="UniProtKB"/>
</dbReference>
<dbReference type="GO" id="GO:0035005">
    <property type="term" value="F:1-phosphatidylinositol-4-phosphate 3-kinase activity"/>
    <property type="evidence" value="ECO:0000314"/>
    <property type="project" value="UniProtKB"/>
</dbReference>
<dbReference type="GO" id="GO:0005524">
    <property type="term" value="F:ATP binding"/>
    <property type="evidence" value="ECO:0007669"/>
    <property type="project" value="UniProtKB-KW"/>
</dbReference>
<dbReference type="GO" id="GO:0046875">
    <property type="term" value="F:ephrin receptor binding"/>
    <property type="evidence" value="ECO:0000353"/>
    <property type="project" value="UniProtKB"/>
</dbReference>
<dbReference type="GO" id="GO:0042802">
    <property type="term" value="F:identical protein binding"/>
    <property type="evidence" value="ECO:0000353"/>
    <property type="project" value="IntAct"/>
</dbReference>
<dbReference type="GO" id="GO:0004672">
    <property type="term" value="F:protein kinase activity"/>
    <property type="evidence" value="ECO:0000304"/>
    <property type="project" value="UniProtKB"/>
</dbReference>
<dbReference type="GO" id="GO:0106310">
    <property type="term" value="F:protein serine kinase activity"/>
    <property type="evidence" value="ECO:0000314"/>
    <property type="project" value="UniProtKB"/>
</dbReference>
<dbReference type="GO" id="GO:0004674">
    <property type="term" value="F:protein serine/threonine kinase activity"/>
    <property type="evidence" value="ECO:0007669"/>
    <property type="project" value="UniProtKB-KW"/>
</dbReference>
<dbReference type="GO" id="GO:0002250">
    <property type="term" value="P:adaptive immune response"/>
    <property type="evidence" value="ECO:0000304"/>
    <property type="project" value="UniProtKB"/>
</dbReference>
<dbReference type="GO" id="GO:0001525">
    <property type="term" value="P:angiogenesis"/>
    <property type="evidence" value="ECO:0007669"/>
    <property type="project" value="UniProtKB-KW"/>
</dbReference>
<dbReference type="GO" id="GO:0016477">
    <property type="term" value="P:cell migration"/>
    <property type="evidence" value="ECO:0000318"/>
    <property type="project" value="GO_Central"/>
</dbReference>
<dbReference type="GO" id="GO:0071320">
    <property type="term" value="P:cellular response to cAMP"/>
    <property type="evidence" value="ECO:0007669"/>
    <property type="project" value="Ensembl"/>
</dbReference>
<dbReference type="GO" id="GO:0002407">
    <property type="term" value="P:dendritic cell chemotaxis"/>
    <property type="evidence" value="ECO:0000304"/>
    <property type="project" value="UniProtKB"/>
</dbReference>
<dbReference type="GO" id="GO:0006897">
    <property type="term" value="P:endocytosis"/>
    <property type="evidence" value="ECO:0007669"/>
    <property type="project" value="UniProtKB-KW"/>
</dbReference>
<dbReference type="GO" id="GO:0007186">
    <property type="term" value="P:G protein-coupled receptor signaling pathway"/>
    <property type="evidence" value="ECO:0000314"/>
    <property type="project" value="UniProtKB"/>
</dbReference>
<dbReference type="GO" id="GO:0097284">
    <property type="term" value="P:hepatocyte apoptotic process"/>
    <property type="evidence" value="ECO:0007669"/>
    <property type="project" value="Ensembl"/>
</dbReference>
<dbReference type="GO" id="GO:0006955">
    <property type="term" value="P:immune response"/>
    <property type="evidence" value="ECO:0000303"/>
    <property type="project" value="ComplexPortal"/>
</dbReference>
<dbReference type="GO" id="GO:0006954">
    <property type="term" value="P:inflammatory response"/>
    <property type="evidence" value="ECO:0000304"/>
    <property type="project" value="UniProtKB"/>
</dbReference>
<dbReference type="GO" id="GO:0045087">
    <property type="term" value="P:innate immune response"/>
    <property type="evidence" value="ECO:0000304"/>
    <property type="project" value="UniProtKB"/>
</dbReference>
<dbReference type="GO" id="GO:0043303">
    <property type="term" value="P:mast cell degranulation"/>
    <property type="evidence" value="ECO:0000304"/>
    <property type="project" value="UniProtKB"/>
</dbReference>
<dbReference type="GO" id="GO:0035747">
    <property type="term" value="P:natural killer cell chemotaxis"/>
    <property type="evidence" value="ECO:0000304"/>
    <property type="project" value="UniProtKB"/>
</dbReference>
<dbReference type="GO" id="GO:0055118">
    <property type="term" value="P:negative regulation of cardiac muscle contraction"/>
    <property type="evidence" value="ECO:0000304"/>
    <property type="project" value="UniProtKB"/>
</dbReference>
<dbReference type="GO" id="GO:2000270">
    <property type="term" value="P:negative regulation of fibroblast apoptotic process"/>
    <property type="evidence" value="ECO:0007669"/>
    <property type="project" value="Ensembl"/>
</dbReference>
<dbReference type="GO" id="GO:0010897">
    <property type="term" value="P:negative regulation of triglyceride catabolic process"/>
    <property type="evidence" value="ECO:0007669"/>
    <property type="project" value="Ensembl"/>
</dbReference>
<dbReference type="GO" id="GO:0030593">
    <property type="term" value="P:neutrophil chemotaxis"/>
    <property type="evidence" value="ECO:0000304"/>
    <property type="project" value="UniProtKB"/>
</dbReference>
<dbReference type="GO" id="GO:0072672">
    <property type="term" value="P:neutrophil extravasation"/>
    <property type="evidence" value="ECO:0000304"/>
    <property type="project" value="UniProtKB"/>
</dbReference>
<dbReference type="GO" id="GO:0043491">
    <property type="term" value="P:phosphatidylinositol 3-kinase/protein kinase B signal transduction"/>
    <property type="evidence" value="ECO:0000314"/>
    <property type="project" value="UniProtKB"/>
</dbReference>
<dbReference type="GO" id="GO:0046854">
    <property type="term" value="P:phosphatidylinositol phosphate biosynthetic process"/>
    <property type="evidence" value="ECO:0000314"/>
    <property type="project" value="UniProtKB"/>
</dbReference>
<dbReference type="GO" id="GO:0036092">
    <property type="term" value="P:phosphatidylinositol-3-phosphate biosynthetic process"/>
    <property type="evidence" value="ECO:0000318"/>
    <property type="project" value="GO_Central"/>
</dbReference>
<dbReference type="GO" id="GO:0048015">
    <property type="term" value="P:phosphatidylinositol-mediated signaling"/>
    <property type="evidence" value="ECO:0000318"/>
    <property type="project" value="GO_Central"/>
</dbReference>
<dbReference type="GO" id="GO:0007200">
    <property type="term" value="P:phospholipase C-activating G protein-coupled receptor signaling pathway"/>
    <property type="evidence" value="ECO:0000250"/>
    <property type="project" value="UniProtKB"/>
</dbReference>
<dbReference type="GO" id="GO:0070527">
    <property type="term" value="P:platelet aggregation"/>
    <property type="evidence" value="ECO:0000304"/>
    <property type="project" value="UniProtKB"/>
</dbReference>
<dbReference type="GO" id="GO:0002675">
    <property type="term" value="P:positive regulation of acute inflammatory response"/>
    <property type="evidence" value="ECO:0007669"/>
    <property type="project" value="Ensembl"/>
</dbReference>
<dbReference type="GO" id="GO:0001819">
    <property type="term" value="P:positive regulation of cytokine production"/>
    <property type="evidence" value="ECO:0000304"/>
    <property type="project" value="UniProtKB"/>
</dbReference>
<dbReference type="GO" id="GO:0007204">
    <property type="term" value="P:positive regulation of cytosolic calcium ion concentration"/>
    <property type="evidence" value="ECO:0007669"/>
    <property type="project" value="Ensembl"/>
</dbReference>
<dbReference type="GO" id="GO:0010595">
    <property type="term" value="P:positive regulation of endothelial cell migration"/>
    <property type="evidence" value="ECO:0000315"/>
    <property type="project" value="BHF-UCL"/>
</dbReference>
<dbReference type="GO" id="GO:0043406">
    <property type="term" value="P:positive regulation of MAP kinase activity"/>
    <property type="evidence" value="ECO:0000314"/>
    <property type="project" value="UniProtKB"/>
</dbReference>
<dbReference type="GO" id="GO:0051897">
    <property type="term" value="P:positive regulation of phosphatidylinositol 3-kinase/protein kinase B signal transduction"/>
    <property type="evidence" value="ECO:0000314"/>
    <property type="project" value="UniProtKB"/>
</dbReference>
<dbReference type="GO" id="GO:0035022">
    <property type="term" value="P:positive regulation of Rac protein signal transduction"/>
    <property type="evidence" value="ECO:0000315"/>
    <property type="project" value="BHF-UCL"/>
</dbReference>
<dbReference type="GO" id="GO:0045765">
    <property type="term" value="P:regulation of angiogenesis"/>
    <property type="evidence" value="ECO:0000315"/>
    <property type="project" value="UniProt"/>
</dbReference>
<dbReference type="GO" id="GO:1903169">
    <property type="term" value="P:regulation of calcium ion transmembrane transport"/>
    <property type="evidence" value="ECO:0007669"/>
    <property type="project" value="Ensembl"/>
</dbReference>
<dbReference type="GO" id="GO:0033628">
    <property type="term" value="P:regulation of cell adhesion mediated by integrin"/>
    <property type="evidence" value="ECO:0000304"/>
    <property type="project" value="UniProtKB"/>
</dbReference>
<dbReference type="GO" id="GO:0002679">
    <property type="term" value="P:respiratory burst involved in defense response"/>
    <property type="evidence" value="ECO:0000304"/>
    <property type="project" value="UniProtKB"/>
</dbReference>
<dbReference type="GO" id="GO:0032252">
    <property type="term" value="P:secretory granule localization"/>
    <property type="evidence" value="ECO:0007669"/>
    <property type="project" value="Ensembl"/>
</dbReference>
<dbReference type="GO" id="GO:0003376">
    <property type="term" value="P:sphingosine-1-phosphate receptor signaling pathway"/>
    <property type="evidence" value="ECO:0000315"/>
    <property type="project" value="BHF-UCL"/>
</dbReference>
<dbReference type="GO" id="GO:0042110">
    <property type="term" value="P:T cell activation"/>
    <property type="evidence" value="ECO:0000304"/>
    <property type="project" value="UniProtKB"/>
</dbReference>
<dbReference type="GO" id="GO:0010818">
    <property type="term" value="P:T cell chemotaxis"/>
    <property type="evidence" value="ECO:0000304"/>
    <property type="project" value="UniProtKB"/>
</dbReference>
<dbReference type="GO" id="GO:0042098">
    <property type="term" value="P:T cell proliferation"/>
    <property type="evidence" value="ECO:0000304"/>
    <property type="project" value="UniProtKB"/>
</dbReference>
<dbReference type="CDD" id="cd08399">
    <property type="entry name" value="C2_PI3K_class_I_gamma"/>
    <property type="match status" value="1"/>
</dbReference>
<dbReference type="CDD" id="cd00872">
    <property type="entry name" value="PI3Ka_I"/>
    <property type="match status" value="1"/>
</dbReference>
<dbReference type="CDD" id="cd00894">
    <property type="entry name" value="PI3Kc_IB_gamma"/>
    <property type="match status" value="1"/>
</dbReference>
<dbReference type="FunFam" id="3.30.1010.10:FF:000008">
    <property type="entry name" value="Phosphatidylinositol 4,5-bisphosphate 3-kinase catalytic subunit gamma"/>
    <property type="match status" value="1"/>
</dbReference>
<dbReference type="FunFam" id="1.10.1070.11:FF:000010">
    <property type="entry name" value="Phosphatidylinositol 4,5-bisphosphate 3-kinase catalytic subunit gamma isoform"/>
    <property type="match status" value="1"/>
</dbReference>
<dbReference type="FunFam" id="1.25.40.70:FF:000006">
    <property type="entry name" value="Phosphatidylinositol 4,5-bisphosphate 3-kinase catalytic subunit gamma isoform"/>
    <property type="match status" value="1"/>
</dbReference>
<dbReference type="FunFam" id="2.60.40.150:FF:000087">
    <property type="entry name" value="Phosphatidylinositol 4,5-bisphosphate 3-kinase catalytic subunit gamma isoform"/>
    <property type="match status" value="1"/>
</dbReference>
<dbReference type="FunFam" id="3.10.20.770:FF:000001">
    <property type="entry name" value="Phosphatidylinositol 4,5-bisphosphate 3-kinase catalytic subunit gamma isoform"/>
    <property type="match status" value="1"/>
</dbReference>
<dbReference type="Gene3D" id="3.10.20.770">
    <property type="match status" value="1"/>
</dbReference>
<dbReference type="Gene3D" id="2.60.40.150">
    <property type="entry name" value="C2 domain"/>
    <property type="match status" value="1"/>
</dbReference>
<dbReference type="Gene3D" id="1.10.1070.11">
    <property type="entry name" value="Phosphatidylinositol 3-/4-kinase, catalytic domain"/>
    <property type="match status" value="1"/>
</dbReference>
<dbReference type="Gene3D" id="3.30.1010.10">
    <property type="entry name" value="Phosphatidylinositol 3-kinase Catalytic Subunit, Chain A, domain 4"/>
    <property type="match status" value="1"/>
</dbReference>
<dbReference type="Gene3D" id="1.25.40.70">
    <property type="entry name" value="Phosphatidylinositol 3-kinase, accessory domain (PIK)"/>
    <property type="match status" value="1"/>
</dbReference>
<dbReference type="InterPro" id="IPR016024">
    <property type="entry name" value="ARM-type_fold"/>
</dbReference>
<dbReference type="InterPro" id="IPR035892">
    <property type="entry name" value="C2_domain_sf"/>
</dbReference>
<dbReference type="InterPro" id="IPR011009">
    <property type="entry name" value="Kinase-like_dom_sf"/>
</dbReference>
<dbReference type="InterPro" id="IPR000403">
    <property type="entry name" value="PI3/4_kinase_cat_dom"/>
</dbReference>
<dbReference type="InterPro" id="IPR036940">
    <property type="entry name" value="PI3/4_kinase_cat_sf"/>
</dbReference>
<dbReference type="InterPro" id="IPR018936">
    <property type="entry name" value="PI3/4_kinase_CS"/>
</dbReference>
<dbReference type="InterPro" id="IPR002420">
    <property type="entry name" value="PI3K-type_C2_dom"/>
</dbReference>
<dbReference type="InterPro" id="IPR003113">
    <property type="entry name" value="PI3K_ABD"/>
</dbReference>
<dbReference type="InterPro" id="IPR001263">
    <property type="entry name" value="PI3K_accessory_dom"/>
</dbReference>
<dbReference type="InterPro" id="IPR042236">
    <property type="entry name" value="PI3K_accessory_sf"/>
</dbReference>
<dbReference type="InterPro" id="IPR000341">
    <property type="entry name" value="PI3K_Ras-bd_dom"/>
</dbReference>
<dbReference type="InterPro" id="IPR015433">
    <property type="entry name" value="PI_Kinase"/>
</dbReference>
<dbReference type="InterPro" id="IPR045580">
    <property type="entry name" value="PIK3CG_ABD"/>
</dbReference>
<dbReference type="InterPro" id="IPR029071">
    <property type="entry name" value="Ubiquitin-like_domsf"/>
</dbReference>
<dbReference type="PANTHER" id="PTHR10048:SF34">
    <property type="entry name" value="PHOSPHATIDYLINOSITOL 4,5-BISPHOSPHATE 3-KINASE CATALYTIC SUBUNIT GAMMA ISOFORM"/>
    <property type="match status" value="1"/>
</dbReference>
<dbReference type="PANTHER" id="PTHR10048">
    <property type="entry name" value="PHOSPHATIDYLINOSITOL KINASE"/>
    <property type="match status" value="1"/>
</dbReference>
<dbReference type="Pfam" id="PF00454">
    <property type="entry name" value="PI3_PI4_kinase"/>
    <property type="match status" value="1"/>
</dbReference>
<dbReference type="Pfam" id="PF00792">
    <property type="entry name" value="PI3K_C2"/>
    <property type="match status" value="1"/>
</dbReference>
<dbReference type="Pfam" id="PF00794">
    <property type="entry name" value="PI3K_rbd"/>
    <property type="match status" value="1"/>
</dbReference>
<dbReference type="Pfam" id="PF00613">
    <property type="entry name" value="PI3Ka"/>
    <property type="match status" value="1"/>
</dbReference>
<dbReference type="Pfam" id="PF19710">
    <property type="entry name" value="PIK3CG_ABD"/>
    <property type="match status" value="1"/>
</dbReference>
<dbReference type="SMART" id="SM00142">
    <property type="entry name" value="PI3K_C2"/>
    <property type="match status" value="1"/>
</dbReference>
<dbReference type="SMART" id="SM00144">
    <property type="entry name" value="PI3K_rbd"/>
    <property type="match status" value="1"/>
</dbReference>
<dbReference type="SMART" id="SM00145">
    <property type="entry name" value="PI3Ka"/>
    <property type="match status" value="1"/>
</dbReference>
<dbReference type="SMART" id="SM00146">
    <property type="entry name" value="PI3Kc"/>
    <property type="match status" value="1"/>
</dbReference>
<dbReference type="SUPFAM" id="SSF48371">
    <property type="entry name" value="ARM repeat"/>
    <property type="match status" value="1"/>
</dbReference>
<dbReference type="SUPFAM" id="SSF49562">
    <property type="entry name" value="C2 domain (Calcium/lipid-binding domain, CaLB)"/>
    <property type="match status" value="1"/>
</dbReference>
<dbReference type="SUPFAM" id="SSF56112">
    <property type="entry name" value="Protein kinase-like (PK-like)"/>
    <property type="match status" value="1"/>
</dbReference>
<dbReference type="SUPFAM" id="SSF54236">
    <property type="entry name" value="Ubiquitin-like"/>
    <property type="match status" value="1"/>
</dbReference>
<dbReference type="PROSITE" id="PS51547">
    <property type="entry name" value="C2_PI3K"/>
    <property type="match status" value="1"/>
</dbReference>
<dbReference type="PROSITE" id="PS00915">
    <property type="entry name" value="PI3_4_KINASE_1"/>
    <property type="match status" value="1"/>
</dbReference>
<dbReference type="PROSITE" id="PS00916">
    <property type="entry name" value="PI3_4_KINASE_2"/>
    <property type="match status" value="1"/>
</dbReference>
<dbReference type="PROSITE" id="PS50290">
    <property type="entry name" value="PI3_4_KINASE_3"/>
    <property type="match status" value="1"/>
</dbReference>
<dbReference type="PROSITE" id="PS51544">
    <property type="entry name" value="PI3K_ABD"/>
    <property type="match status" value="1"/>
</dbReference>
<dbReference type="PROSITE" id="PS51546">
    <property type="entry name" value="PI3K_RBD"/>
    <property type="match status" value="1"/>
</dbReference>
<dbReference type="PROSITE" id="PS51545">
    <property type="entry name" value="PIK_HELICAL"/>
    <property type="match status" value="1"/>
</dbReference>